<accession>P9WGR1</accession>
<accession>F2GEM2</accession>
<accession>P0A5Y6</accession>
<accession>P46533</accession>
<accession>Q540M9</accession>
<keyword id="KW-0002">3D-structure</keyword>
<keyword id="KW-0046">Antibiotic resistance</keyword>
<keyword id="KW-0275">Fatty acid biosynthesis</keyword>
<keyword id="KW-0276">Fatty acid metabolism</keyword>
<keyword id="KW-0444">Lipid biosynthesis</keyword>
<keyword id="KW-0443">Lipid metabolism</keyword>
<keyword id="KW-0520">NAD</keyword>
<keyword id="KW-0560">Oxidoreductase</keyword>
<keyword id="KW-0597">Phosphoprotein</keyword>
<keyword id="KW-1185">Reference proteome</keyword>
<comment type="function">
    <text evidence="23 28">Enoyl-ACP reductase of the type II fatty acid syntase (FAS-II) system, which is involved in the biosynthesis of mycolic acids, a major component of mycobacterial cell walls (PubMed:25227413). Catalyzes the NADH-dependent reduction of the double bond of 2-trans-enoyl-[acyl-carrier protein], an essential step in the fatty acid elongation cycle of the FAS-II pathway (PubMed:7599116). Shows preference for long-chain fatty acyl thioester substrates (&gt;C16), and can also use 2-trans-enoyl-CoAs as alternative substrates (PubMed:7599116). The mycobacterial FAS-II system utilizes the products of the FAS-I system as primers to extend fatty acyl chain lengths up to C56, forming the meromycolate chain that serves as the precursor for final mycolic acids (PubMed:25227413).</text>
</comment>
<comment type="function">
    <text evidence="3 7 10 25 38">Is the primary target of the first-line antitubercular drug isoniazid (INH) and of the second-line drug ethionamide (ETH) (PubMed:12406221, PubMed:16906155, PubMed:17227913, PubMed:8284673). Overexpressed inhA confers INH and ETH resistance to M.tuberculosis (PubMed:12406221). The mechanism of isoniazid action against InhA is covalent attachment of the activated form of the drug to the nicotinamide ring of NAD and binding of the INH-NAD adduct to the active site of InhA (PubMed:16906155, PubMed:9417034). Similarly, the ETH-NAD adduct binds InhA (PubMed:17227913).</text>
</comment>
<comment type="catalytic activity">
    <reaction evidence="23">
        <text>a 2,3-saturated acyl-[ACP] + NAD(+) = a (2E)-enoyl-[ACP] + NADH + H(+)</text>
        <dbReference type="Rhea" id="RHEA:10240"/>
        <dbReference type="Rhea" id="RHEA-COMP:9925"/>
        <dbReference type="Rhea" id="RHEA-COMP:9926"/>
        <dbReference type="ChEBI" id="CHEBI:15378"/>
        <dbReference type="ChEBI" id="CHEBI:57540"/>
        <dbReference type="ChEBI" id="CHEBI:57945"/>
        <dbReference type="ChEBI" id="CHEBI:78784"/>
        <dbReference type="ChEBI" id="CHEBI:78785"/>
        <dbReference type="EC" id="1.3.1.9"/>
    </reaction>
    <physiologicalReaction direction="right-to-left" evidence="36">
        <dbReference type="Rhea" id="RHEA:10242"/>
    </physiologicalReaction>
</comment>
<comment type="catalytic activity">
    <reaction evidence="2 14 15 16 23">
        <text>a 2,3-saturated acyl-CoA + NAD(+) = a (2E)-enoyl-CoA + NADH + H(+)</text>
        <dbReference type="Rhea" id="RHEA:18177"/>
        <dbReference type="ChEBI" id="CHEBI:15378"/>
        <dbReference type="ChEBI" id="CHEBI:57540"/>
        <dbReference type="ChEBI" id="CHEBI:57945"/>
        <dbReference type="ChEBI" id="CHEBI:58856"/>
        <dbReference type="ChEBI" id="CHEBI:65111"/>
    </reaction>
    <physiologicalReaction direction="right-to-left" evidence="36">
        <dbReference type="Rhea" id="RHEA:18179"/>
    </physiologicalReaction>
</comment>
<comment type="catalytic activity">
    <reaction evidence="23">
        <text>(2E)-octenoyl-[ACP] + NADH + H(+) = octanoyl-[ACP] + NAD(+)</text>
        <dbReference type="Rhea" id="RHEA:41528"/>
        <dbReference type="Rhea" id="RHEA-COMP:9635"/>
        <dbReference type="Rhea" id="RHEA-COMP:9636"/>
        <dbReference type="ChEBI" id="CHEBI:15378"/>
        <dbReference type="ChEBI" id="CHEBI:57540"/>
        <dbReference type="ChEBI" id="CHEBI:57945"/>
        <dbReference type="ChEBI" id="CHEBI:78462"/>
        <dbReference type="ChEBI" id="CHEBI:78463"/>
    </reaction>
    <physiologicalReaction direction="left-to-right" evidence="36">
        <dbReference type="Rhea" id="RHEA:41529"/>
    </physiologicalReaction>
</comment>
<comment type="catalytic activity">
    <reaction evidence="14 16 23">
        <text>(2E)-octenoyl-CoA + NADH + H(+) = octanoyl-CoA + NAD(+)</text>
        <dbReference type="Rhea" id="RHEA:63232"/>
        <dbReference type="ChEBI" id="CHEBI:15378"/>
        <dbReference type="ChEBI" id="CHEBI:57386"/>
        <dbReference type="ChEBI" id="CHEBI:57540"/>
        <dbReference type="ChEBI" id="CHEBI:57945"/>
        <dbReference type="ChEBI" id="CHEBI:62242"/>
    </reaction>
    <physiologicalReaction direction="left-to-right" evidence="36">
        <dbReference type="Rhea" id="RHEA:63233"/>
    </physiologicalReaction>
</comment>
<comment type="catalytic activity">
    <reaction evidence="2 15 23">
        <text>(2E)-dodecenoyl-CoA + NADH + H(+) = dodecanoyl-CoA + NAD(+)</text>
        <dbReference type="Rhea" id="RHEA:45408"/>
        <dbReference type="ChEBI" id="CHEBI:15378"/>
        <dbReference type="ChEBI" id="CHEBI:57330"/>
        <dbReference type="ChEBI" id="CHEBI:57375"/>
        <dbReference type="ChEBI" id="CHEBI:57540"/>
        <dbReference type="ChEBI" id="CHEBI:57945"/>
    </reaction>
    <physiologicalReaction direction="left-to-right" evidence="36">
        <dbReference type="Rhea" id="RHEA:45409"/>
    </physiologicalReaction>
</comment>
<comment type="catalytic activity">
    <reaction evidence="23">
        <text>(2E)-hexadecenoyl-CoA + NADH + H(+) = hexadecanoyl-CoA + NAD(+)</text>
        <dbReference type="Rhea" id="RHEA:46072"/>
        <dbReference type="ChEBI" id="CHEBI:15378"/>
        <dbReference type="ChEBI" id="CHEBI:57379"/>
        <dbReference type="ChEBI" id="CHEBI:57540"/>
        <dbReference type="ChEBI" id="CHEBI:57945"/>
        <dbReference type="ChEBI" id="CHEBI:61526"/>
    </reaction>
    <physiologicalReaction direction="left-to-right" evidence="36">
        <dbReference type="Rhea" id="RHEA:46073"/>
    </physiologicalReaction>
</comment>
<comment type="catalytic activity">
    <reaction evidence="23">
        <text>(2E)-eicosenoyl-CoA + NADH + H(+) = eicosanoyl-CoA + NAD(+)</text>
        <dbReference type="Rhea" id="RHEA:46076"/>
        <dbReference type="ChEBI" id="CHEBI:15378"/>
        <dbReference type="ChEBI" id="CHEBI:57380"/>
        <dbReference type="ChEBI" id="CHEBI:57540"/>
        <dbReference type="ChEBI" id="CHEBI:57945"/>
        <dbReference type="ChEBI" id="CHEBI:74691"/>
    </reaction>
    <physiologicalReaction direction="left-to-right" evidence="36">
        <dbReference type="Rhea" id="RHEA:46077"/>
    </physiologicalReaction>
</comment>
<comment type="catalytic activity">
    <reaction evidence="23">
        <text>(2E)-tetracosenoyl-CoA + NADH + H(+) = tetracosanoyl-CoA + NAD(+)</text>
        <dbReference type="Rhea" id="RHEA:46080"/>
        <dbReference type="ChEBI" id="CHEBI:15378"/>
        <dbReference type="ChEBI" id="CHEBI:57540"/>
        <dbReference type="ChEBI" id="CHEBI:57945"/>
        <dbReference type="ChEBI" id="CHEBI:65052"/>
        <dbReference type="ChEBI" id="CHEBI:74693"/>
    </reaction>
    <physiologicalReaction direction="left-to-right" evidence="36">
        <dbReference type="Rhea" id="RHEA:46081"/>
    </physiologicalReaction>
</comment>
<comment type="activity regulation">
    <text evidence="4 5 8 9 10 11 12 13 14 16 17 18 19 20 21 22 25 26 35">InhA activity is controlled via phosphorylation: phosphorylation on Thr-266 decreases InhA activity (5-fold reduction) and likely negatively regulates biosynthesis of mycolic acids and growth of the bacterium (PubMed:20864541, PubMed:21143326). The antitubercular pro-drug isoniazid (INH) is oxidatively activated by the catalase-peroxidase KatG and then covalently binds NAD to form an adduct that inhibits the activity of InhA (PubMed:14623976, PubMed:9417034, Ref.5). The inhibitory adduct is the isonicotinic-acyl-NADH where the isonicotinic-acyl group replaces the 4S (and not the 4R) hydrogen of NADH (PubMed:9417034). Similarly, the antitubercular pro-drugs ethionamide (ETH) and prothionamide (PTH) are activated by the flavoprotein monooxygenase EthA, and forms an adduct with NAD (ETH-NAD and PTH-NAD, respectively) that is a tight-binding inhibitor of InhA (PubMed:17227913). Is inhibited by triclosan and derivatives, pyrazole derivative Genz-8575, indole-5-amide Genz-10850, alkyl diphenyl ethers, pyrrolidine carboxamides, arylamides, pyridomycin, methyl-thiazoles, 4-hydroxy-2-pyridones, and N-benzyl-4-((heteroaryl)methyl)benzamides (PubMed:12606558, PubMed:17034137, PubMed:17163639, PubMed:17723305, PubMed:19130456, PubMed:20200152, PubMed:22987724, PubMed:24107081, PubMed:24616444, PubMed:25568071). Pyridomycin shows a unique mode of InhA inhibition by simultaneously blocking parts of the NADH and the lipid substrate-binding pocket of InhA (PubMed:24292073). Is also inhibited by thiadiazole compounds, that have very attractive antitubercular properties (PubMed:27428438).</text>
</comment>
<comment type="biophysicochemical properties">
    <kinetics>
        <KM evidence="23">2 uM for 2-trans-octenoyl-ACP (at pH 6.8 and 25 degrees Celsius)</KM>
        <KM evidence="23">8.1 uM for NADH (at pH 6.8 and 25 degrees Celsius)</KM>
        <KM evidence="2">66 uM for NADH (at pH 6.8 and 25 degrees Celsius)</KM>
        <KM evidence="14">19.1 uM for NADH (at pH 6.8)</KM>
        <KM evidence="16">13.5 uM for NADH (at pH 6.8 and 25 degrees Celsius)</KM>
        <KM evidence="23">467 uM for 2-trans-octenoyl-CoA (at pH 6.8 and 25 degrees Celsius)</KM>
        <KM evidence="14">528 uM for 2-trans-octenoyl-CoA (at pH 6.8)</KM>
        <KM evidence="23">48 uM for 2-trans-dodecenoyl-CoA (at pH 6.8 and 25 degrees Celsius)</KM>
        <KM evidence="2">27 uM for 2-trans-dodecenoyl-CoA (at pH 6.8 and 25 degrees Celsius)</KM>
        <KM evidence="15">40.9 uM for 2-trans-dodecenoyl-CoA (at pH 7.5 and 25 degrees Celsius)</KM>
        <KM evidence="23">1.5 uM for 2-trans-hexadecenoyl-CoA (at pH 6.8 and 25 degrees Celsius)</KM>
        <Vmax evidence="23">2.2 umol/min/mg enzyme for the reduction of 2-trans-octenoyl-ACP (at pH 6.8 and 25 degrees Celsius)</Vmax>
        <Vmax evidence="23">3.6 umol/min/mg enzyme for the reduction of 2-trans-octenoyl-CoA (at pH 6.8 and 25 degrees Celsius)</Vmax>
        <Vmax evidence="16">0.52 umol/min/mg enzyme for the reduction of 2-trans-octenoyl-CoA (at pH 6.8 and 25 degrees Celsius)</Vmax>
        <Vmax evidence="14">15.3 umol/min/mg enzyme for the reduction of 2-trans-octenoyl-CoA (at pH 6.8)</Vmax>
        <Vmax evidence="23">5.8 umol/min/mg enzyme for the reduction of 2-trans-dodecenoyl-CoA (at pH 6.8 and 25 degrees Celsius)</Vmax>
        <Vmax evidence="15">11.4 umol/min/mg enzyme for the reduction of 2-trans-dodecenoyl-CoA (at pH 7.5 and 25 degrees Celsius)</Vmax>
        <Vmax evidence="23">4.5 umol/min/mg enzyme for the reduction of 2-trans-hexadecenoyl-CoA (at pH 6.8 and 25 degrees Celsius)</Vmax>
        <text evidence="2 15">kcat is 320.4 min(-1) for the reduction of 2-trans-dodecenoyl-CoA (at pH 7.5 and 25 degrees Celsius) (PubMed:21143326). kcat is 278 min(-1) for the reduction of 2-trans-dodecenoyl-CoA (at pH 6.8 and 25 degrees Celsius) (PubMed:10521269).</text>
    </kinetics>
</comment>
<comment type="pathway">
    <text evidence="28">Lipid metabolism; mycolic acid biosynthesis.</text>
</comment>
<comment type="subunit">
    <text evidence="1 6 23">Homodimer (PubMed:7599116). Homotetramer (PubMed:10336454, PubMed:16647717).</text>
</comment>
<comment type="PTM">
    <text evidence="14 15">Is phosphorylated on Thr-266 in vivo. In vitro, can be phosphorylated by multiple Ser/Thr protein kinases (STPK) such as PknA, PknB, PknE, PknH and PknL. Phosphorylation decreases enzymatic activity.</text>
</comment>
<comment type="miscellaneous">
    <text evidence="34">Was identified as a high-confidence drug target.</text>
</comment>
<comment type="miscellaneous">
    <text evidence="7 37">Many isoniazid- and ethionamide-resistant clinical isolates contain mutations within the inhA locus. Resistance to isoniazid and ethionamide can be conferred by the single substitution of alanine for serine 94; this drug resistance seems to be directly related to a perturbation in the hydrogen-bonding network that decreases the binding of NADH and the INH-NAD adduct.</text>
</comment>
<comment type="similarity">
    <text evidence="31">Belongs to the short-chain dehydrogenases/reductases (SDR) family. FabI subfamily.</text>
</comment>
<dbReference type="EC" id="1.3.1.9" evidence="23"/>
<dbReference type="EMBL" id="U02492">
    <property type="protein sequence ID" value="AAC43210.1"/>
    <property type="molecule type" value="Unassigned_DNA"/>
</dbReference>
<dbReference type="EMBL" id="AY155363">
    <property type="protein sequence ID" value="AAN75060.1"/>
    <property type="molecule type" value="Genomic_DNA"/>
</dbReference>
<dbReference type="EMBL" id="AL123456">
    <property type="protein sequence ID" value="CCP44244.1"/>
    <property type="molecule type" value="Genomic_DNA"/>
</dbReference>
<dbReference type="PIR" id="G70710">
    <property type="entry name" value="G70710"/>
</dbReference>
<dbReference type="RefSeq" id="NP_216000.1">
    <property type="nucleotide sequence ID" value="NC_000962.3"/>
</dbReference>
<dbReference type="RefSeq" id="WP_003407553.1">
    <property type="nucleotide sequence ID" value="NZ_NVQJ01000004.1"/>
</dbReference>
<dbReference type="PDB" id="1BVR">
    <property type="method" value="X-ray"/>
    <property type="resolution" value="2.80 A"/>
    <property type="chains" value="A/B/C/D/E/F=2-269"/>
</dbReference>
<dbReference type="PDB" id="1ENY">
    <property type="method" value="X-ray"/>
    <property type="resolution" value="2.20 A"/>
    <property type="chains" value="A=3-269"/>
</dbReference>
<dbReference type="PDB" id="1ENZ">
    <property type="method" value="X-ray"/>
    <property type="resolution" value="2.70 A"/>
    <property type="chains" value="A=3-269"/>
</dbReference>
<dbReference type="PDB" id="1P44">
    <property type="method" value="X-ray"/>
    <property type="resolution" value="2.70 A"/>
    <property type="chains" value="A/B/C/D/E/F=1-269"/>
</dbReference>
<dbReference type="PDB" id="1P45">
    <property type="method" value="X-ray"/>
    <property type="resolution" value="2.60 A"/>
    <property type="chains" value="A/B=1-269"/>
</dbReference>
<dbReference type="PDB" id="1ZID">
    <property type="method" value="X-ray"/>
    <property type="resolution" value="2.70 A"/>
    <property type="chains" value="A=3-269"/>
</dbReference>
<dbReference type="PDB" id="2AQ8">
    <property type="method" value="X-ray"/>
    <property type="resolution" value="1.92 A"/>
    <property type="chains" value="A=1-269"/>
</dbReference>
<dbReference type="PDB" id="2AQH">
    <property type="method" value="X-ray"/>
    <property type="resolution" value="2.01 A"/>
    <property type="chains" value="A=1-269"/>
</dbReference>
<dbReference type="PDB" id="2AQI">
    <property type="method" value="X-ray"/>
    <property type="resolution" value="2.20 A"/>
    <property type="chains" value="A=1-269"/>
</dbReference>
<dbReference type="PDB" id="2AQK">
    <property type="method" value="X-ray"/>
    <property type="resolution" value="2.30 A"/>
    <property type="chains" value="A=1-269"/>
</dbReference>
<dbReference type="PDB" id="2B35">
    <property type="method" value="X-ray"/>
    <property type="resolution" value="2.30 A"/>
    <property type="chains" value="A/B/C/D/E/F=1-269"/>
</dbReference>
<dbReference type="PDB" id="2B36">
    <property type="method" value="X-ray"/>
    <property type="resolution" value="2.80 A"/>
    <property type="chains" value="A/B/C/D/E/F=1-269"/>
</dbReference>
<dbReference type="PDB" id="2B37">
    <property type="method" value="X-ray"/>
    <property type="resolution" value="2.60 A"/>
    <property type="chains" value="A/B/C/D/E/F=1-269"/>
</dbReference>
<dbReference type="PDB" id="2H9I">
    <property type="method" value="X-ray"/>
    <property type="resolution" value="2.20 A"/>
    <property type="chains" value="A=2-269"/>
</dbReference>
<dbReference type="PDB" id="2IDZ">
    <property type="method" value="X-ray"/>
    <property type="resolution" value="2.00 A"/>
    <property type="chains" value="A=2-269"/>
</dbReference>
<dbReference type="PDB" id="2IE0">
    <property type="method" value="X-ray"/>
    <property type="resolution" value="2.20 A"/>
    <property type="chains" value="A=2-269"/>
</dbReference>
<dbReference type="PDB" id="2IEB">
    <property type="method" value="X-ray"/>
    <property type="resolution" value="2.20 A"/>
    <property type="chains" value="A=2-269"/>
</dbReference>
<dbReference type="PDB" id="2IED">
    <property type="method" value="X-ray"/>
    <property type="resolution" value="2.14 A"/>
    <property type="chains" value="A/B/C/D=2-269"/>
</dbReference>
<dbReference type="PDB" id="2NSD">
    <property type="method" value="X-ray"/>
    <property type="resolution" value="1.90 A"/>
    <property type="chains" value="A/B=1-269"/>
</dbReference>
<dbReference type="PDB" id="2NTJ">
    <property type="method" value="X-ray"/>
    <property type="resolution" value="2.50 A"/>
    <property type="chains" value="A/B=3-269"/>
</dbReference>
<dbReference type="PDB" id="2NV6">
    <property type="method" value="X-ray"/>
    <property type="resolution" value="1.90 A"/>
    <property type="chains" value="A=3-269"/>
</dbReference>
<dbReference type="PDB" id="2PR2">
    <property type="method" value="X-ray"/>
    <property type="resolution" value="2.50 A"/>
    <property type="chains" value="A=1-269"/>
</dbReference>
<dbReference type="PDB" id="2X22">
    <property type="method" value="X-ray"/>
    <property type="resolution" value="2.10 A"/>
    <property type="chains" value="A/B=1-269"/>
</dbReference>
<dbReference type="PDB" id="2X23">
    <property type="method" value="X-ray"/>
    <property type="resolution" value="1.81 A"/>
    <property type="chains" value="A/B/E/G=1-269"/>
</dbReference>
<dbReference type="PDB" id="3FNE">
    <property type="method" value="X-ray"/>
    <property type="resolution" value="1.98 A"/>
    <property type="chains" value="A/B/C/D=1-269"/>
</dbReference>
<dbReference type="PDB" id="3FNF">
    <property type="method" value="X-ray"/>
    <property type="resolution" value="2.30 A"/>
    <property type="chains" value="A/B/C/D=1-269"/>
</dbReference>
<dbReference type="PDB" id="3FNG">
    <property type="method" value="X-ray"/>
    <property type="resolution" value="1.97 A"/>
    <property type="chains" value="A=1-269"/>
</dbReference>
<dbReference type="PDB" id="3FNH">
    <property type="method" value="X-ray"/>
    <property type="resolution" value="2.80 A"/>
    <property type="chains" value="A=1-269"/>
</dbReference>
<dbReference type="PDB" id="3OEW">
    <property type="method" value="X-ray"/>
    <property type="resolution" value="2.20 A"/>
    <property type="chains" value="A=1-269"/>
</dbReference>
<dbReference type="PDB" id="3OEY">
    <property type="method" value="X-ray"/>
    <property type="resolution" value="2.00 A"/>
    <property type="chains" value="A=1-269"/>
</dbReference>
<dbReference type="PDB" id="3OF2">
    <property type="method" value="X-ray"/>
    <property type="resolution" value="2.00 A"/>
    <property type="chains" value="A=1-269"/>
</dbReference>
<dbReference type="PDB" id="4BGE">
    <property type="method" value="X-ray"/>
    <property type="resolution" value="2.25 A"/>
    <property type="chains" value="A/B/C/D/E/F=1-269"/>
</dbReference>
<dbReference type="PDB" id="4BGI">
    <property type="method" value="X-ray"/>
    <property type="resolution" value="2.09 A"/>
    <property type="chains" value="A/B/C/D/E/F=2-269"/>
</dbReference>
<dbReference type="PDB" id="4BII">
    <property type="method" value="X-ray"/>
    <property type="resolution" value="1.95 A"/>
    <property type="chains" value="A/B/C/D=1-269"/>
</dbReference>
<dbReference type="PDB" id="4BQP">
    <property type="method" value="X-ray"/>
    <property type="resolution" value="1.89 A"/>
    <property type="chains" value="A/B/C/D/E/F=1-269"/>
</dbReference>
<dbReference type="PDB" id="4BQR">
    <property type="method" value="X-ray"/>
    <property type="resolution" value="2.05 A"/>
    <property type="chains" value="A/B/C/D=1-269"/>
</dbReference>
<dbReference type="PDB" id="4COD">
    <property type="method" value="X-ray"/>
    <property type="resolution" value="2.40 A"/>
    <property type="chains" value="B/D/F/H=1-269"/>
</dbReference>
<dbReference type="PDB" id="4D0R">
    <property type="method" value="X-ray"/>
    <property type="resolution" value="2.75 A"/>
    <property type="chains" value="A=1-269"/>
</dbReference>
<dbReference type="PDB" id="4D0S">
    <property type="method" value="X-ray"/>
    <property type="resolution" value="1.64 A"/>
    <property type="chains" value="A/B/C/D=1-269"/>
</dbReference>
<dbReference type="PDB" id="4DQU">
    <property type="method" value="X-ray"/>
    <property type="resolution" value="2.45 A"/>
    <property type="chains" value="A=1-269"/>
</dbReference>
<dbReference type="PDB" id="4DRE">
    <property type="method" value="X-ray"/>
    <property type="resolution" value="2.40 A"/>
    <property type="chains" value="A=1-269"/>
</dbReference>
<dbReference type="PDB" id="4DTI">
    <property type="method" value="X-ray"/>
    <property type="resolution" value="1.90 A"/>
    <property type="chains" value="A=1-269"/>
</dbReference>
<dbReference type="PDB" id="4OHU">
    <property type="method" value="X-ray"/>
    <property type="resolution" value="1.60 A"/>
    <property type="chains" value="A/B/C/D=1-269"/>
</dbReference>
<dbReference type="PDB" id="4OIM">
    <property type="method" value="X-ray"/>
    <property type="resolution" value="1.85 A"/>
    <property type="chains" value="A=1-269"/>
</dbReference>
<dbReference type="PDB" id="4OXK">
    <property type="method" value="X-ray"/>
    <property type="resolution" value="1.84 A"/>
    <property type="chains" value="A/B/C/D=1-269"/>
</dbReference>
<dbReference type="PDB" id="4OXN">
    <property type="method" value="X-ray"/>
    <property type="resolution" value="2.29 A"/>
    <property type="chains" value="A/B=1-269"/>
</dbReference>
<dbReference type="PDB" id="4OXY">
    <property type="method" value="X-ray"/>
    <property type="resolution" value="2.35 A"/>
    <property type="chains" value="A/B/C/D=1-269"/>
</dbReference>
<dbReference type="PDB" id="4OYR">
    <property type="method" value="X-ray"/>
    <property type="resolution" value="2.30 A"/>
    <property type="chains" value="A/B/C/D=1-269"/>
</dbReference>
<dbReference type="PDB" id="4QXM">
    <property type="method" value="X-ray"/>
    <property type="resolution" value="2.20 A"/>
    <property type="chains" value="A/C/E/G=1-269"/>
</dbReference>
<dbReference type="PDB" id="4R9R">
    <property type="method" value="X-ray"/>
    <property type="resolution" value="2.90 A"/>
    <property type="chains" value="A/C/E/G=1-269"/>
</dbReference>
<dbReference type="PDB" id="4R9S">
    <property type="method" value="X-ray"/>
    <property type="resolution" value="3.20 A"/>
    <property type="chains" value="A/C/E/G=1-269"/>
</dbReference>
<dbReference type="PDB" id="4TRJ">
    <property type="method" value="X-ray"/>
    <property type="resolution" value="1.73 A"/>
    <property type="chains" value="A=1-269"/>
</dbReference>
<dbReference type="PDB" id="4TRM">
    <property type="method" value="X-ray"/>
    <property type="resolution" value="1.80 A"/>
    <property type="chains" value="A/B/C/D/E/F=1-269"/>
</dbReference>
<dbReference type="PDB" id="4TRN">
    <property type="method" value="X-ray"/>
    <property type="resolution" value="1.95 A"/>
    <property type="chains" value="A=1-269"/>
</dbReference>
<dbReference type="PDB" id="4TRO">
    <property type="method" value="X-ray"/>
    <property type="resolution" value="1.40 A"/>
    <property type="chains" value="A=1-269"/>
</dbReference>
<dbReference type="PDB" id="4TZK">
    <property type="method" value="X-ray"/>
    <property type="resolution" value="1.62 A"/>
    <property type="chains" value="A=1-269"/>
</dbReference>
<dbReference type="PDB" id="4TZT">
    <property type="method" value="X-ray"/>
    <property type="resolution" value="1.86 A"/>
    <property type="chains" value="A=1-269"/>
</dbReference>
<dbReference type="PDB" id="4U0J">
    <property type="method" value="X-ray"/>
    <property type="resolution" value="1.62 A"/>
    <property type="chains" value="A=1-269"/>
</dbReference>
<dbReference type="PDB" id="4U0K">
    <property type="method" value="X-ray"/>
    <property type="resolution" value="1.90 A"/>
    <property type="chains" value="A=1-269"/>
</dbReference>
<dbReference type="PDB" id="4UVD">
    <property type="method" value="X-ray"/>
    <property type="resolution" value="1.82 A"/>
    <property type="chains" value="A=1-269"/>
</dbReference>
<dbReference type="PDB" id="4UVE">
    <property type="method" value="X-ray"/>
    <property type="resolution" value="1.99 A"/>
    <property type="chains" value="A=1-269"/>
</dbReference>
<dbReference type="PDB" id="4UVG">
    <property type="method" value="X-ray"/>
    <property type="resolution" value="1.92 A"/>
    <property type="chains" value="A=1-269"/>
</dbReference>
<dbReference type="PDB" id="4UVH">
    <property type="method" value="X-ray"/>
    <property type="resolution" value="1.89 A"/>
    <property type="chains" value="A/B/C/D=1-269"/>
</dbReference>
<dbReference type="PDB" id="4UVI">
    <property type="method" value="X-ray"/>
    <property type="resolution" value="1.73 A"/>
    <property type="chains" value="A/B/C/D=1-269"/>
</dbReference>
<dbReference type="PDB" id="5COQ">
    <property type="method" value="X-ray"/>
    <property type="resolution" value="2.30 A"/>
    <property type="chains" value="A/B/C/D=1-269"/>
</dbReference>
<dbReference type="PDB" id="5CP8">
    <property type="method" value="X-ray"/>
    <property type="resolution" value="2.40 A"/>
    <property type="chains" value="A=1-269"/>
</dbReference>
<dbReference type="PDB" id="5CPB">
    <property type="method" value="X-ray"/>
    <property type="resolution" value="2.00 A"/>
    <property type="chains" value="A/B/C/D/E/F=1-269"/>
</dbReference>
<dbReference type="PDB" id="5CPF">
    <property type="method" value="X-ray"/>
    <property type="resolution" value="3.41 A"/>
    <property type="chains" value="A/B/C/D=1-269"/>
</dbReference>
<dbReference type="PDB" id="5G0S">
    <property type="method" value="X-ray"/>
    <property type="resolution" value="1.74 A"/>
    <property type="chains" value="A/B/C/D=1-269"/>
</dbReference>
<dbReference type="PDB" id="5G0T">
    <property type="method" value="X-ray"/>
    <property type="resolution" value="1.54 A"/>
    <property type="chains" value="A/B/C/D=1-269"/>
</dbReference>
<dbReference type="PDB" id="5G0U">
    <property type="method" value="X-ray"/>
    <property type="resolution" value="1.73 A"/>
    <property type="chains" value="A/B/C/D=1-269"/>
</dbReference>
<dbReference type="PDB" id="5G0V">
    <property type="method" value="X-ray"/>
    <property type="resolution" value="1.79 A"/>
    <property type="chains" value="A/B/C/D=1-269"/>
</dbReference>
<dbReference type="PDB" id="5G0W">
    <property type="method" value="X-ray"/>
    <property type="resolution" value="1.79 A"/>
    <property type="chains" value="A/B/C/D=1-269"/>
</dbReference>
<dbReference type="PDB" id="5JFO">
    <property type="method" value="X-ray"/>
    <property type="resolution" value="2.91 A"/>
    <property type="chains" value="A/B/C/D=1-269"/>
</dbReference>
<dbReference type="PDB" id="5MTP">
    <property type="method" value="X-ray"/>
    <property type="resolution" value="2.00 A"/>
    <property type="chains" value="A/B/C/D/E/F/G/H=1-269"/>
</dbReference>
<dbReference type="PDB" id="5MTQ">
    <property type="method" value="X-ray"/>
    <property type="resolution" value="2.60 A"/>
    <property type="chains" value="A/B/C/D/E/F/G/H=1-269"/>
</dbReference>
<dbReference type="PDB" id="5MTR">
    <property type="method" value="X-ray"/>
    <property type="resolution" value="2.00 A"/>
    <property type="chains" value="A/B/C/D/E/F/G/H=1-269"/>
</dbReference>
<dbReference type="PDB" id="5OIF">
    <property type="method" value="X-ray"/>
    <property type="resolution" value="2.03 A"/>
    <property type="chains" value="A/B=1-269"/>
</dbReference>
<dbReference type="PDB" id="5OIL">
    <property type="method" value="X-ray"/>
    <property type="resolution" value="2.76 A"/>
    <property type="chains" value="A=1-269"/>
</dbReference>
<dbReference type="PDB" id="5OIM">
    <property type="method" value="X-ray"/>
    <property type="resolution" value="1.91 A"/>
    <property type="chains" value="A=1-269"/>
</dbReference>
<dbReference type="PDB" id="5OIN">
    <property type="method" value="X-ray"/>
    <property type="resolution" value="2.82 A"/>
    <property type="chains" value="A/B/C/D=1-269"/>
</dbReference>
<dbReference type="PDB" id="5OIT">
    <property type="method" value="X-ray"/>
    <property type="resolution" value="2.58 A"/>
    <property type="chains" value="B/D/F/H=1-269"/>
</dbReference>
<dbReference type="PDB" id="5UGS">
    <property type="method" value="X-ray"/>
    <property type="resolution" value="2.80 A"/>
    <property type="chains" value="A/B/C/D/E/G=1-269"/>
</dbReference>
<dbReference type="PDB" id="5UGT">
    <property type="method" value="X-ray"/>
    <property type="resolution" value="2.60 A"/>
    <property type="chains" value="A/B/E/G=1-269"/>
</dbReference>
<dbReference type="PDB" id="5UGU">
    <property type="method" value="X-ray"/>
    <property type="resolution" value="1.95 A"/>
    <property type="chains" value="A=1-269"/>
</dbReference>
<dbReference type="PDB" id="5VRL">
    <property type="method" value="X-ray"/>
    <property type="resolution" value="2.65 A"/>
    <property type="chains" value="A=1-269"/>
</dbReference>
<dbReference type="PDB" id="5VRM">
    <property type="method" value="X-ray"/>
    <property type="resolution" value="2.50 A"/>
    <property type="chains" value="A/B/C/D=1-269"/>
</dbReference>
<dbReference type="PDB" id="5VRN">
    <property type="method" value="X-ray"/>
    <property type="resolution" value="2.55 A"/>
    <property type="chains" value="A/B/C/D/E/F=1-269"/>
</dbReference>
<dbReference type="PDB" id="5W07">
    <property type="method" value="X-ray"/>
    <property type="resolution" value="2.65 A"/>
    <property type="chains" value="A=1-269"/>
</dbReference>
<dbReference type="PDB" id="6EP8">
    <property type="method" value="X-ray"/>
    <property type="resolution" value="1.80 A"/>
    <property type="chains" value="A=1-269"/>
</dbReference>
<dbReference type="PDB" id="6GGM">
    <property type="method" value="X-ray"/>
    <property type="resolution" value="2.73 A"/>
    <property type="chains" value="P/Q=53-61"/>
</dbReference>
<dbReference type="PDB" id="6GH1">
    <property type="method" value="X-ray"/>
    <property type="resolution" value="2.10 A"/>
    <property type="chains" value="P/Q/R/Z=53-61"/>
</dbReference>
<dbReference type="PDB" id="6GH4">
    <property type="method" value="X-ray"/>
    <property type="resolution" value="2.16 A"/>
    <property type="chains" value="P/Q/R/Y=53-61"/>
</dbReference>
<dbReference type="PDB" id="6GHN">
    <property type="method" value="X-ray"/>
    <property type="resolution" value="2.54 A"/>
    <property type="chains" value="P/Q=53-61"/>
</dbReference>
<dbReference type="PDB" id="6R9W">
    <property type="method" value="X-ray"/>
    <property type="resolution" value="1.75 A"/>
    <property type="chains" value="A/B/C/D/E/F=1-269"/>
</dbReference>
<dbReference type="PDB" id="6SQ5">
    <property type="method" value="X-ray"/>
    <property type="resolution" value="1.84 A"/>
    <property type="chains" value="A=1-269"/>
</dbReference>
<dbReference type="PDB" id="6SQ7">
    <property type="method" value="X-ray"/>
    <property type="resolution" value="1.76 A"/>
    <property type="chains" value="A=1-269"/>
</dbReference>
<dbReference type="PDB" id="6SQ9">
    <property type="method" value="X-ray"/>
    <property type="resolution" value="1.75 A"/>
    <property type="chains" value="A=1-269"/>
</dbReference>
<dbReference type="PDB" id="6SQB">
    <property type="method" value="X-ray"/>
    <property type="resolution" value="1.77 A"/>
    <property type="chains" value="A=1-269"/>
</dbReference>
<dbReference type="PDB" id="6SQD">
    <property type="method" value="X-ray"/>
    <property type="resolution" value="1.72 A"/>
    <property type="chains" value="A=1-269"/>
</dbReference>
<dbReference type="PDB" id="6SQL">
    <property type="method" value="X-ray"/>
    <property type="resolution" value="2.35 A"/>
    <property type="chains" value="A=1-269"/>
</dbReference>
<dbReference type="PDB" id="6YUU">
    <property type="method" value="X-ray"/>
    <property type="resolution" value="2.01 A"/>
    <property type="chains" value="A=1-269"/>
</dbReference>
<dbReference type="PDB" id="6ZKW">
    <property type="method" value="X-ray"/>
    <property type="resolution" value="2.26 A"/>
    <property type="chains" value="C=53-61"/>
</dbReference>
<dbReference type="PDB" id="6ZKX">
    <property type="method" value="X-ray"/>
    <property type="resolution" value="2.17 A"/>
    <property type="chains" value="C=53-64"/>
</dbReference>
<dbReference type="PDB" id="6ZKY">
    <property type="method" value="X-ray"/>
    <property type="resolution" value="2.65 A"/>
    <property type="chains" value="C=53-60"/>
</dbReference>
<dbReference type="PDB" id="6ZKZ">
    <property type="method" value="X-ray"/>
    <property type="resolution" value="2.30 A"/>
    <property type="chains" value="C=53-60"/>
</dbReference>
<dbReference type="PDB" id="7E48">
    <property type="method" value="X-ray"/>
    <property type="resolution" value="2.50 A"/>
    <property type="chains" value="A/B/C/D=1-269"/>
</dbReference>
<dbReference type="PDB" id="8OTL">
    <property type="method" value="X-ray"/>
    <property type="resolution" value="2.11 A"/>
    <property type="chains" value="A/B/C/D/E/F=1-269"/>
</dbReference>
<dbReference type="PDB" id="8OTM">
    <property type="method" value="X-ray"/>
    <property type="resolution" value="1.60 A"/>
    <property type="chains" value="A/B/C/D=1-269"/>
</dbReference>
<dbReference type="PDB" id="8OTN">
    <property type="method" value="X-ray"/>
    <property type="resolution" value="1.96 A"/>
    <property type="chains" value="A/B/C/D=1-269"/>
</dbReference>
<dbReference type="PDB" id="8QFY">
    <property type="method" value="X-ray"/>
    <property type="resolution" value="2.33 A"/>
    <property type="chains" value="CCC/HHH=53-61"/>
</dbReference>
<dbReference type="PDBsum" id="1BVR"/>
<dbReference type="PDBsum" id="1ENY"/>
<dbReference type="PDBsum" id="1ENZ"/>
<dbReference type="PDBsum" id="1P44"/>
<dbReference type="PDBsum" id="1P45"/>
<dbReference type="PDBsum" id="1ZID"/>
<dbReference type="PDBsum" id="2AQ8"/>
<dbReference type="PDBsum" id="2AQH"/>
<dbReference type="PDBsum" id="2AQI"/>
<dbReference type="PDBsum" id="2AQK"/>
<dbReference type="PDBsum" id="2B35"/>
<dbReference type="PDBsum" id="2B36"/>
<dbReference type="PDBsum" id="2B37"/>
<dbReference type="PDBsum" id="2H9I"/>
<dbReference type="PDBsum" id="2IDZ"/>
<dbReference type="PDBsum" id="2IE0"/>
<dbReference type="PDBsum" id="2IEB"/>
<dbReference type="PDBsum" id="2IED"/>
<dbReference type="PDBsum" id="2NSD"/>
<dbReference type="PDBsum" id="2NTJ"/>
<dbReference type="PDBsum" id="2NV6"/>
<dbReference type="PDBsum" id="2PR2"/>
<dbReference type="PDBsum" id="2X22"/>
<dbReference type="PDBsum" id="2X23"/>
<dbReference type="PDBsum" id="3FNE"/>
<dbReference type="PDBsum" id="3FNF"/>
<dbReference type="PDBsum" id="3FNG"/>
<dbReference type="PDBsum" id="3FNH"/>
<dbReference type="PDBsum" id="3OEW"/>
<dbReference type="PDBsum" id="3OEY"/>
<dbReference type="PDBsum" id="3OF2"/>
<dbReference type="PDBsum" id="4BGE"/>
<dbReference type="PDBsum" id="4BGI"/>
<dbReference type="PDBsum" id="4BII"/>
<dbReference type="PDBsum" id="4BQP"/>
<dbReference type="PDBsum" id="4BQR"/>
<dbReference type="PDBsum" id="4COD"/>
<dbReference type="PDBsum" id="4D0R"/>
<dbReference type="PDBsum" id="4D0S"/>
<dbReference type="PDBsum" id="4DQU"/>
<dbReference type="PDBsum" id="4DRE"/>
<dbReference type="PDBsum" id="4DTI"/>
<dbReference type="PDBsum" id="4OHU"/>
<dbReference type="PDBsum" id="4OIM"/>
<dbReference type="PDBsum" id="4OXK"/>
<dbReference type="PDBsum" id="4OXN"/>
<dbReference type="PDBsum" id="4OXY"/>
<dbReference type="PDBsum" id="4OYR"/>
<dbReference type="PDBsum" id="4QXM"/>
<dbReference type="PDBsum" id="4R9R"/>
<dbReference type="PDBsum" id="4R9S"/>
<dbReference type="PDBsum" id="4TRJ"/>
<dbReference type="PDBsum" id="4TRM"/>
<dbReference type="PDBsum" id="4TRN"/>
<dbReference type="PDBsum" id="4TRO"/>
<dbReference type="PDBsum" id="4TZK"/>
<dbReference type="PDBsum" id="4TZT"/>
<dbReference type="PDBsum" id="4U0J"/>
<dbReference type="PDBsum" id="4U0K"/>
<dbReference type="PDBsum" id="4UVD"/>
<dbReference type="PDBsum" id="4UVE"/>
<dbReference type="PDBsum" id="4UVG"/>
<dbReference type="PDBsum" id="4UVH"/>
<dbReference type="PDBsum" id="4UVI"/>
<dbReference type="PDBsum" id="5COQ"/>
<dbReference type="PDBsum" id="5CP8"/>
<dbReference type="PDBsum" id="5CPB"/>
<dbReference type="PDBsum" id="5CPF"/>
<dbReference type="PDBsum" id="5G0S"/>
<dbReference type="PDBsum" id="5G0T"/>
<dbReference type="PDBsum" id="5G0U"/>
<dbReference type="PDBsum" id="5G0V"/>
<dbReference type="PDBsum" id="5G0W"/>
<dbReference type="PDBsum" id="5JFO"/>
<dbReference type="PDBsum" id="5MTP"/>
<dbReference type="PDBsum" id="5MTQ"/>
<dbReference type="PDBsum" id="5MTR"/>
<dbReference type="PDBsum" id="5OIF"/>
<dbReference type="PDBsum" id="5OIL"/>
<dbReference type="PDBsum" id="5OIM"/>
<dbReference type="PDBsum" id="5OIN"/>
<dbReference type="PDBsum" id="5OIT"/>
<dbReference type="PDBsum" id="5UGS"/>
<dbReference type="PDBsum" id="5UGT"/>
<dbReference type="PDBsum" id="5UGU"/>
<dbReference type="PDBsum" id="5VRL"/>
<dbReference type="PDBsum" id="5VRM"/>
<dbReference type="PDBsum" id="5VRN"/>
<dbReference type="PDBsum" id="5W07"/>
<dbReference type="PDBsum" id="6EP8"/>
<dbReference type="PDBsum" id="6GGM"/>
<dbReference type="PDBsum" id="6GH1"/>
<dbReference type="PDBsum" id="6GH4"/>
<dbReference type="PDBsum" id="6GHN"/>
<dbReference type="PDBsum" id="6R9W"/>
<dbReference type="PDBsum" id="6SQ5"/>
<dbReference type="PDBsum" id="6SQ7"/>
<dbReference type="PDBsum" id="6SQ9"/>
<dbReference type="PDBsum" id="6SQB"/>
<dbReference type="PDBsum" id="6SQD"/>
<dbReference type="PDBsum" id="6SQL"/>
<dbReference type="PDBsum" id="6YUU"/>
<dbReference type="PDBsum" id="6ZKW"/>
<dbReference type="PDBsum" id="6ZKX"/>
<dbReference type="PDBsum" id="6ZKY"/>
<dbReference type="PDBsum" id="6ZKZ"/>
<dbReference type="PDBsum" id="7E48"/>
<dbReference type="PDBsum" id="8OTL"/>
<dbReference type="PDBsum" id="8OTM"/>
<dbReference type="PDBsum" id="8OTN"/>
<dbReference type="PDBsum" id="8QFY"/>
<dbReference type="SMR" id="P9WGR1"/>
<dbReference type="FunCoup" id="P9WGR1">
    <property type="interactions" value="171"/>
</dbReference>
<dbReference type="STRING" id="83332.Rv1484"/>
<dbReference type="BindingDB" id="P9WGR1"/>
<dbReference type="ChEMBL" id="CHEMBL1849"/>
<dbReference type="DrugBank" id="DB07155">
    <property type="generic name" value="(3S)-1-CYCLOHEXYL-5-OXO-N-PHENYLPYRROLIDINE-3-CARBOXAMIDE"/>
</dbReference>
<dbReference type="DrugBank" id="DB07188">
    <property type="generic name" value="(3S)-1-CYCLOHEXYL-N-(3,5-DICHLOROPHENYL)-5-OXOPYRROLIDINE-3-CARBOXAMIDE"/>
</dbReference>
<dbReference type="DrugBank" id="DB07192">
    <property type="generic name" value="(3S)-N-(3-BROMOPHENYL)-1-CYCLOHEXYL-5-OXOPYRROLIDINE-3-CARBOXAMIDE"/>
</dbReference>
<dbReference type="DrugBank" id="DB07090">
    <property type="generic name" value="(3S)-N-(3-CHLORO-2-METHYLPHENYL)-1-CYCLOHEXYL-5-OXOPYRROLIDINE-3-CARBOXAMIDE"/>
</dbReference>
<dbReference type="DrugBank" id="DB07222">
    <property type="generic name" value="(3S)-N-(5-CHLORO-2-METHYLPHENYL)-1-CYCLOHEXYL-5-OXOPYRROLIDINE-3-CARBOXAMIDE"/>
</dbReference>
<dbReference type="DrugBank" id="DB07287">
    <property type="generic name" value="2-(2,4-DICHLOROPHENOXY)-5-(PYRIDIN-2-YLMETHYL)PHENOL"/>
</dbReference>
<dbReference type="DrugBank" id="DB03030">
    <property type="generic name" value="4-(2-Thienyl)-1-(4-Methylbenzyl)-1h-Imidazole"/>
</dbReference>
<dbReference type="DrugBank" id="DB07178">
    <property type="generic name" value="5-PENTYL-2-PHENOXYPHENOL"/>
</dbReference>
<dbReference type="DrugBank" id="DB02379">
    <property type="generic name" value="Beta-D-Glucose"/>
</dbReference>
<dbReference type="DrugBank" id="DB00609">
    <property type="generic name" value="Ethionamide"/>
</dbReference>
<dbReference type="DrugBank" id="DB04289">
    <property type="generic name" value="Genz-10850"/>
</dbReference>
<dbReference type="DrugBank" id="DB01691">
    <property type="generic name" value="Indole Naphthyridinone"/>
</dbReference>
<dbReference type="DrugBank" id="DB00951">
    <property type="generic name" value="Isoniazid"/>
</dbReference>
<dbReference type="DrugBank" id="DB07123">
    <property type="generic name" value="N-(4-METHYLBENZOYL)-4-BENZYLPIPERIDINE"/>
</dbReference>
<dbReference type="DrugBank" id="DB14128">
    <property type="generic name" value="Nadide"/>
</dbReference>
<dbReference type="DrugBank" id="DB05154">
    <property type="generic name" value="Pretomanid"/>
</dbReference>
<dbReference type="DrugBank" id="DB12667">
    <property type="generic name" value="Protionamide"/>
</dbReference>
<dbReference type="DrugBank" id="DB00339">
    <property type="generic name" value="Pyrazinamide"/>
</dbReference>
<dbReference type="DrugBank" id="DB02990">
    <property type="generic name" value="S-(2-Acetamidoethyl) hexadecanethioate"/>
</dbReference>
<dbReference type="DrugBank" id="DB04393">
    <property type="generic name" value="Soneclosan"/>
</dbReference>
<dbReference type="DrugBank" id="DB08604">
    <property type="generic name" value="Triclosan"/>
</dbReference>
<dbReference type="DrugCentral" id="P9WGR1"/>
<dbReference type="SwissLipids" id="SLP:000000967"/>
<dbReference type="iPTMnet" id="P9WGR1"/>
<dbReference type="PaxDb" id="83332-Rv1484"/>
<dbReference type="DNASU" id="886523"/>
<dbReference type="GeneID" id="45425463"/>
<dbReference type="GeneID" id="886523"/>
<dbReference type="KEGG" id="mtu:Rv1484"/>
<dbReference type="KEGG" id="mtv:RVBD_1484"/>
<dbReference type="TubercuList" id="Rv1484"/>
<dbReference type="eggNOG" id="COG0623">
    <property type="taxonomic scope" value="Bacteria"/>
</dbReference>
<dbReference type="InParanoid" id="P9WGR1"/>
<dbReference type="OrthoDB" id="9803628at2"/>
<dbReference type="PhylomeDB" id="P9WGR1"/>
<dbReference type="BioCyc" id="MetaCyc:G185E-5668-MONOMER"/>
<dbReference type="BRENDA" id="1.3.1.118">
    <property type="organism ID" value="3445"/>
</dbReference>
<dbReference type="BRENDA" id="1.3.1.9">
    <property type="organism ID" value="3445"/>
</dbReference>
<dbReference type="SABIO-RK" id="P9WGR1"/>
<dbReference type="UniPathway" id="UPA00915"/>
<dbReference type="EvolutionaryTrace" id="P9WGR1"/>
<dbReference type="Proteomes" id="UP000001584">
    <property type="component" value="Chromosome"/>
</dbReference>
<dbReference type="GO" id="GO:0009274">
    <property type="term" value="C:peptidoglycan-based cell wall"/>
    <property type="evidence" value="ECO:0007005"/>
    <property type="project" value="MTBBASE"/>
</dbReference>
<dbReference type="GO" id="GO:0005886">
    <property type="term" value="C:plasma membrane"/>
    <property type="evidence" value="ECO:0007005"/>
    <property type="project" value="MTBBASE"/>
</dbReference>
<dbReference type="GO" id="GO:0004318">
    <property type="term" value="F:enoyl-[acyl-carrier-protein] reductase (NADH) activity"/>
    <property type="evidence" value="ECO:0000314"/>
    <property type="project" value="MTBBASE"/>
</dbReference>
<dbReference type="GO" id="GO:0005504">
    <property type="term" value="F:fatty acid binding"/>
    <property type="evidence" value="ECO:0000314"/>
    <property type="project" value="MTBBASE"/>
</dbReference>
<dbReference type="GO" id="GO:0070403">
    <property type="term" value="F:NAD+ binding"/>
    <property type="evidence" value="ECO:0000314"/>
    <property type="project" value="MTBBASE"/>
</dbReference>
<dbReference type="GO" id="GO:0050343">
    <property type="term" value="F:trans-2-enoyl-CoA reductase (NADH) activity"/>
    <property type="evidence" value="ECO:0007669"/>
    <property type="project" value="RHEA"/>
</dbReference>
<dbReference type="GO" id="GO:0030497">
    <property type="term" value="P:fatty acid elongation"/>
    <property type="evidence" value="ECO:0000315"/>
    <property type="project" value="MTBBASE"/>
</dbReference>
<dbReference type="GO" id="GO:0071768">
    <property type="term" value="P:mycolic acid biosynthetic process"/>
    <property type="evidence" value="ECO:0000314"/>
    <property type="project" value="MTBBASE"/>
</dbReference>
<dbReference type="GO" id="GO:0046677">
    <property type="term" value="P:response to antibiotic"/>
    <property type="evidence" value="ECO:0007669"/>
    <property type="project" value="UniProtKB-KW"/>
</dbReference>
<dbReference type="CDD" id="cd05372">
    <property type="entry name" value="ENR_SDR"/>
    <property type="match status" value="1"/>
</dbReference>
<dbReference type="FunFam" id="3.40.50.720:FF:000350">
    <property type="entry name" value="Enoyl-[acyl-carrier-protein] reductase [NADH]"/>
    <property type="match status" value="1"/>
</dbReference>
<dbReference type="Gene3D" id="3.40.50.720">
    <property type="entry name" value="NAD(P)-binding Rossmann-like Domain"/>
    <property type="match status" value="1"/>
</dbReference>
<dbReference type="InterPro" id="IPR014358">
    <property type="entry name" value="Enoyl-ACP_Rdtase_NADH"/>
</dbReference>
<dbReference type="InterPro" id="IPR053410">
    <property type="entry name" value="Mycobact_enoyl-ACP_red"/>
</dbReference>
<dbReference type="InterPro" id="IPR036291">
    <property type="entry name" value="NAD(P)-bd_dom_sf"/>
</dbReference>
<dbReference type="InterPro" id="IPR002347">
    <property type="entry name" value="SDR_fam"/>
</dbReference>
<dbReference type="NCBIfam" id="NF040631">
    <property type="entry name" value="InhA"/>
    <property type="match status" value="1"/>
</dbReference>
<dbReference type="NCBIfam" id="NF005908">
    <property type="entry name" value="PRK07889.1"/>
    <property type="match status" value="1"/>
</dbReference>
<dbReference type="PANTHER" id="PTHR43159">
    <property type="entry name" value="ENOYL-[ACYL-CARRIER-PROTEIN] REDUCTASE"/>
    <property type="match status" value="1"/>
</dbReference>
<dbReference type="PANTHER" id="PTHR43159:SF2">
    <property type="entry name" value="ENOYL-[ACYL-CARRIER-PROTEIN] REDUCTASE [NADH], CHLOROPLASTIC"/>
    <property type="match status" value="1"/>
</dbReference>
<dbReference type="Pfam" id="PF13561">
    <property type="entry name" value="adh_short_C2"/>
    <property type="match status" value="1"/>
</dbReference>
<dbReference type="PIRSF" id="PIRSF000094">
    <property type="entry name" value="Enoyl-ACP_rdct"/>
    <property type="match status" value="1"/>
</dbReference>
<dbReference type="SUPFAM" id="SSF51735">
    <property type="entry name" value="NAD(P)-binding Rossmann-fold domains"/>
    <property type="match status" value="1"/>
</dbReference>
<evidence type="ECO:0000269" key="1">
    <source>
    </source>
</evidence>
<evidence type="ECO:0000269" key="2">
    <source>
    </source>
</evidence>
<evidence type="ECO:0000269" key="3">
    <source>
    </source>
</evidence>
<evidence type="ECO:0000269" key="4">
    <source>
    </source>
</evidence>
<evidence type="ECO:0000269" key="5">
    <source>
    </source>
</evidence>
<evidence type="ECO:0000269" key="6">
    <source>
    </source>
</evidence>
<evidence type="ECO:0000269" key="7">
    <source>
    </source>
</evidence>
<evidence type="ECO:0000269" key="8">
    <source>
    </source>
</evidence>
<evidence type="ECO:0000269" key="9">
    <source>
    </source>
</evidence>
<evidence type="ECO:0000269" key="10">
    <source>
    </source>
</evidence>
<evidence type="ECO:0000269" key="11">
    <source>
    </source>
</evidence>
<evidence type="ECO:0000269" key="12">
    <source>
    </source>
</evidence>
<evidence type="ECO:0000269" key="13">
    <source>
    </source>
</evidence>
<evidence type="ECO:0000269" key="14">
    <source>
    </source>
</evidence>
<evidence type="ECO:0000269" key="15">
    <source>
    </source>
</evidence>
<evidence type="ECO:0000269" key="16">
    <source>
    </source>
</evidence>
<evidence type="ECO:0000269" key="17">
    <source>
    </source>
</evidence>
<evidence type="ECO:0000269" key="18">
    <source>
    </source>
</evidence>
<evidence type="ECO:0000269" key="19">
    <source>
    </source>
</evidence>
<evidence type="ECO:0000269" key="20">
    <source>
    </source>
</evidence>
<evidence type="ECO:0000269" key="21">
    <source>
    </source>
</evidence>
<evidence type="ECO:0000269" key="22">
    <source>
    </source>
</evidence>
<evidence type="ECO:0000269" key="23">
    <source>
    </source>
</evidence>
<evidence type="ECO:0000269" key="24">
    <source>
    </source>
</evidence>
<evidence type="ECO:0000269" key="25">
    <source>
    </source>
</evidence>
<evidence type="ECO:0000269" key="26">
    <source ref="5"/>
</evidence>
<evidence type="ECO:0000303" key="27">
    <source>
    </source>
</evidence>
<evidence type="ECO:0000303" key="28">
    <source>
    </source>
</evidence>
<evidence type="ECO:0000303" key="29">
    <source>
    </source>
</evidence>
<evidence type="ECO:0000303" key="30">
    <source>
    </source>
</evidence>
<evidence type="ECO:0000305" key="31"/>
<evidence type="ECO:0000305" key="32">
    <source>
    </source>
</evidence>
<evidence type="ECO:0000305" key="33">
    <source>
    </source>
</evidence>
<evidence type="ECO:0000305" key="34">
    <source>
    </source>
</evidence>
<evidence type="ECO:0000305" key="35">
    <source>
    </source>
</evidence>
<evidence type="ECO:0000305" key="36">
    <source>
    </source>
</evidence>
<evidence type="ECO:0000305" key="37">
    <source>
    </source>
</evidence>
<evidence type="ECO:0000305" key="38">
    <source>
    </source>
</evidence>
<evidence type="ECO:0007744" key="39">
    <source>
        <dbReference type="PDB" id="1BVR"/>
    </source>
</evidence>
<evidence type="ECO:0007744" key="40">
    <source>
        <dbReference type="PDB" id="1ENY"/>
    </source>
</evidence>
<evidence type="ECO:0007744" key="41">
    <source>
        <dbReference type="PDB" id="1ENZ"/>
    </source>
</evidence>
<evidence type="ECO:0007744" key="42">
    <source>
        <dbReference type="PDB" id="1P44"/>
    </source>
</evidence>
<evidence type="ECO:0007744" key="43">
    <source>
        <dbReference type="PDB" id="1P45"/>
    </source>
</evidence>
<evidence type="ECO:0007744" key="44">
    <source>
        <dbReference type="PDB" id="1ZID"/>
    </source>
</evidence>
<evidence type="ECO:0007744" key="45">
    <source>
        <dbReference type="PDB" id="2AQ8"/>
    </source>
</evidence>
<evidence type="ECO:0007744" key="46">
    <source>
        <dbReference type="PDB" id="2AQH"/>
    </source>
</evidence>
<evidence type="ECO:0007744" key="47">
    <source>
        <dbReference type="PDB" id="2AQI"/>
    </source>
</evidence>
<evidence type="ECO:0007744" key="48">
    <source>
        <dbReference type="PDB" id="2AQK"/>
    </source>
</evidence>
<evidence type="ECO:0007744" key="49">
    <source>
        <dbReference type="PDB" id="2B35"/>
    </source>
</evidence>
<evidence type="ECO:0007744" key="50">
    <source>
        <dbReference type="PDB" id="2B36"/>
    </source>
</evidence>
<evidence type="ECO:0007744" key="51">
    <source>
        <dbReference type="PDB" id="2B37"/>
    </source>
</evidence>
<evidence type="ECO:0007744" key="52">
    <source>
        <dbReference type="PDB" id="2H9I"/>
    </source>
</evidence>
<evidence type="ECO:0007744" key="53">
    <source>
        <dbReference type="PDB" id="2IDZ"/>
    </source>
</evidence>
<evidence type="ECO:0007744" key="54">
    <source>
        <dbReference type="PDB" id="2IE0"/>
    </source>
</evidence>
<evidence type="ECO:0007744" key="55">
    <source>
        <dbReference type="PDB" id="2IEB"/>
    </source>
</evidence>
<evidence type="ECO:0007744" key="56">
    <source>
        <dbReference type="PDB" id="2IED"/>
    </source>
</evidence>
<evidence type="ECO:0007744" key="57">
    <source>
        <dbReference type="PDB" id="2NSD"/>
    </source>
</evidence>
<evidence type="ECO:0007744" key="58">
    <source>
        <dbReference type="PDB" id="2NTJ"/>
    </source>
</evidence>
<evidence type="ECO:0007744" key="59">
    <source>
        <dbReference type="PDB" id="2NV6"/>
    </source>
</evidence>
<evidence type="ECO:0007744" key="60">
    <source>
        <dbReference type="PDB" id="2PR2"/>
    </source>
</evidence>
<evidence type="ECO:0007744" key="61">
    <source>
        <dbReference type="PDB" id="2X22"/>
    </source>
</evidence>
<evidence type="ECO:0007744" key="62">
    <source>
        <dbReference type="PDB" id="2X23"/>
    </source>
</evidence>
<evidence type="ECO:0007744" key="63">
    <source>
        <dbReference type="PDB" id="3FNE"/>
    </source>
</evidence>
<evidence type="ECO:0007744" key="64">
    <source>
        <dbReference type="PDB" id="3FNF"/>
    </source>
</evidence>
<evidence type="ECO:0007744" key="65">
    <source>
        <dbReference type="PDB" id="3FNG"/>
    </source>
</evidence>
<evidence type="ECO:0007744" key="66">
    <source>
        <dbReference type="PDB" id="3FNH"/>
    </source>
</evidence>
<evidence type="ECO:0007744" key="67">
    <source>
        <dbReference type="PDB" id="3OEW"/>
    </source>
</evidence>
<evidence type="ECO:0007744" key="68">
    <source>
        <dbReference type="PDB" id="3OEY"/>
    </source>
</evidence>
<evidence type="ECO:0007744" key="69">
    <source>
        <dbReference type="PDB" id="3OF2"/>
    </source>
</evidence>
<evidence type="ECO:0007744" key="70">
    <source>
        <dbReference type="PDB" id="4BGE"/>
    </source>
</evidence>
<evidence type="ECO:0007744" key="71">
    <source>
        <dbReference type="PDB" id="4BGI"/>
    </source>
</evidence>
<evidence type="ECO:0007744" key="72">
    <source>
        <dbReference type="PDB" id="4BII"/>
    </source>
</evidence>
<evidence type="ECO:0007744" key="73">
    <source>
        <dbReference type="PDB" id="4BQP"/>
    </source>
</evidence>
<evidence type="ECO:0007744" key="74">
    <source>
        <dbReference type="PDB" id="4BQR"/>
    </source>
</evidence>
<evidence type="ECO:0007744" key="75">
    <source>
        <dbReference type="PDB" id="4D0R"/>
    </source>
</evidence>
<evidence type="ECO:0007744" key="76">
    <source>
        <dbReference type="PDB" id="4D0S"/>
    </source>
</evidence>
<evidence type="ECO:0007744" key="77">
    <source>
        <dbReference type="PDB" id="4DQU"/>
    </source>
</evidence>
<evidence type="ECO:0007744" key="78">
    <source>
        <dbReference type="PDB" id="4DRE"/>
    </source>
</evidence>
<evidence type="ECO:0007744" key="79">
    <source>
        <dbReference type="PDB" id="4DTI"/>
    </source>
</evidence>
<evidence type="ECO:0007744" key="80">
    <source>
        <dbReference type="PDB" id="4OHU"/>
    </source>
</evidence>
<evidence type="ECO:0007744" key="81">
    <source>
        <dbReference type="PDB" id="4OXK"/>
    </source>
</evidence>
<evidence type="ECO:0007744" key="82">
    <source>
        <dbReference type="PDB" id="4OXN"/>
    </source>
</evidence>
<evidence type="ECO:0007744" key="83">
    <source>
        <dbReference type="PDB" id="4OXY"/>
    </source>
</evidence>
<evidence type="ECO:0007744" key="84">
    <source>
        <dbReference type="PDB" id="4OYR"/>
    </source>
</evidence>
<evidence type="ECO:0007744" key="85">
    <source>
        <dbReference type="PDB" id="4QXM"/>
    </source>
</evidence>
<evidence type="ECO:0007744" key="86">
    <source>
        <dbReference type="PDB" id="4R9R"/>
    </source>
</evidence>
<evidence type="ECO:0007744" key="87">
    <source>
        <dbReference type="PDB" id="4R9S"/>
    </source>
</evidence>
<evidence type="ECO:0007744" key="88">
    <source>
        <dbReference type="PDB" id="4TRM"/>
    </source>
</evidence>
<evidence type="ECO:0007744" key="89">
    <source>
        <dbReference type="PDB" id="4TRN"/>
    </source>
</evidence>
<evidence type="ECO:0007744" key="90">
    <source>
        <dbReference type="PDB" id="4TRO"/>
    </source>
</evidence>
<evidence type="ECO:0007744" key="91">
    <source>
        <dbReference type="PDB" id="4TZK"/>
    </source>
</evidence>
<evidence type="ECO:0007744" key="92">
    <source>
        <dbReference type="PDB" id="4TZT"/>
    </source>
</evidence>
<evidence type="ECO:0007744" key="93">
    <source>
        <dbReference type="PDB" id="4U0J"/>
    </source>
</evidence>
<evidence type="ECO:0007744" key="94">
    <source>
        <dbReference type="PDB" id="4U0K"/>
    </source>
</evidence>
<evidence type="ECO:0007744" key="95">
    <source>
        <dbReference type="PDB" id="4UVD"/>
    </source>
</evidence>
<evidence type="ECO:0007744" key="96">
    <source>
        <dbReference type="PDB" id="4UVE"/>
    </source>
</evidence>
<evidence type="ECO:0007744" key="97">
    <source>
        <dbReference type="PDB" id="4UVG"/>
    </source>
</evidence>
<evidence type="ECO:0007744" key="98">
    <source>
        <dbReference type="PDB" id="4UVH"/>
    </source>
</evidence>
<evidence type="ECO:0007744" key="99">
    <source>
        <dbReference type="PDB" id="4UVI"/>
    </source>
</evidence>
<evidence type="ECO:0007744" key="100">
    <source>
        <dbReference type="PDB" id="5COQ"/>
    </source>
</evidence>
<evidence type="ECO:0007744" key="101">
    <source>
        <dbReference type="PDB" id="5CP8"/>
    </source>
</evidence>
<evidence type="ECO:0007744" key="102">
    <source>
        <dbReference type="PDB" id="5CPB"/>
    </source>
</evidence>
<evidence type="ECO:0007829" key="103">
    <source>
        <dbReference type="PDB" id="2IED"/>
    </source>
</evidence>
<evidence type="ECO:0007829" key="104">
    <source>
        <dbReference type="PDB" id="4TRO"/>
    </source>
</evidence>
<evidence type="ECO:0007829" key="105">
    <source>
        <dbReference type="PDB" id="5G0T"/>
    </source>
</evidence>
<reference key="1">
    <citation type="journal article" date="1994" name="Science">
        <title>inhA, a gene encoding a target for isoniazid and ethionamide in Mycobacterium tuberculosis.</title>
        <authorList>
            <person name="Banerjee A."/>
            <person name="Dubnau E."/>
            <person name="Quemard A."/>
            <person name="Balasubramanian V."/>
            <person name="Um K.S."/>
            <person name="Wilson T."/>
            <person name="Collins D."/>
            <person name="de Lisle G."/>
            <person name="Jacobs W.R. Jr."/>
        </authorList>
    </citation>
    <scope>NUCLEOTIDE SEQUENCE [GENOMIC DNA]</scope>
    <scope>DRUG TARGET</scope>
    <scope>DRUG RESISTANCE</scope>
    <source>
        <strain>ATCC 25618 / H37Rv</strain>
    </source>
</reference>
<reference key="2">
    <citation type="submission" date="2002-09" db="EMBL/GenBank/DDBJ databases">
        <title>The allelic profiles of multidrug-resistant Mycobacterium tuberculosis isolates from Taiwan.</title>
        <authorList>
            <person name="Shi Z.-Y."/>
            <person name="Lee K."/>
            <person name="Hu C.-H."/>
            <person name="Liu M.-F."/>
        </authorList>
    </citation>
    <scope>NUCLEOTIDE SEQUENCE [GENOMIC DNA]</scope>
    <source>
        <strain>TCVGH1</strain>
    </source>
</reference>
<reference key="3">
    <citation type="journal article" date="1998" name="Nature">
        <title>Deciphering the biology of Mycobacterium tuberculosis from the complete genome sequence.</title>
        <authorList>
            <person name="Cole S.T."/>
            <person name="Brosch R."/>
            <person name="Parkhill J."/>
            <person name="Garnier T."/>
            <person name="Churcher C.M."/>
            <person name="Harris D.E."/>
            <person name="Gordon S.V."/>
            <person name="Eiglmeier K."/>
            <person name="Gas S."/>
            <person name="Barry C.E. III"/>
            <person name="Tekaia F."/>
            <person name="Badcock K."/>
            <person name="Basham D."/>
            <person name="Brown D."/>
            <person name="Chillingworth T."/>
            <person name="Connor R."/>
            <person name="Davies R.M."/>
            <person name="Devlin K."/>
            <person name="Feltwell T."/>
            <person name="Gentles S."/>
            <person name="Hamlin N."/>
            <person name="Holroyd S."/>
            <person name="Hornsby T."/>
            <person name="Jagels K."/>
            <person name="Krogh A."/>
            <person name="McLean J."/>
            <person name="Moule S."/>
            <person name="Murphy L.D."/>
            <person name="Oliver S."/>
            <person name="Osborne J."/>
            <person name="Quail M.A."/>
            <person name="Rajandream M.A."/>
            <person name="Rogers J."/>
            <person name="Rutter S."/>
            <person name="Seeger K."/>
            <person name="Skelton S."/>
            <person name="Squares S."/>
            <person name="Squares R."/>
            <person name="Sulston J.E."/>
            <person name="Taylor K."/>
            <person name="Whitehead S."/>
            <person name="Barrell B.G."/>
        </authorList>
    </citation>
    <scope>NUCLEOTIDE SEQUENCE [LARGE SCALE GENOMIC DNA]</scope>
    <source>
        <strain>ATCC 25618 / H37Rv</strain>
    </source>
</reference>
<reference key="4">
    <citation type="journal article" date="1995" name="Biochemistry">
        <title>Enzymatic characterization of the target for isoniazid in Mycobacterium tuberculosis.</title>
        <authorList>
            <person name="Quemard A."/>
            <person name="Sacchettini J.C."/>
            <person name="Dessen A."/>
            <person name="Vilcheze C."/>
            <person name="Bittman R."/>
            <person name="Jacobs W.R. Jr."/>
            <person name="Blanchard J.S."/>
        </authorList>
    </citation>
    <scope>FUNCTION</scope>
    <scope>CATALYTIC ACTIVITY</scope>
    <scope>BIOPHYSICOCHEMICAL PROPERTIES</scope>
    <scope>SUBSTRATE SPECIFICITY</scope>
    <scope>REACTION MECHANISM</scope>
    <scope>SUBUNIT</scope>
    <scope>MUTAGENESIS OF SER-94</scope>
    <source>
        <strain>H37Rv</strain>
    </source>
</reference>
<reference key="5">
    <citation type="journal article" date="1996" name="J. Am. Chem. Soc.">
        <title>Kinetics of inactivation of WT and C243S mutant of Mycobacterium tuberculosis enoyl reductase by activated isoniazid.</title>
        <authorList>
            <person name="Basso L.A."/>
            <person name="Zheng R."/>
            <person name="Blanchard J.S."/>
        </authorList>
    </citation>
    <scope>ACTIVITY REGULATION</scope>
</reference>
<reference key="6">
    <citation type="journal article" date="1999" name="Biochemistry">
        <title>Roles of tyrosine 158 and lysine 165 in the catalytic mechanism of InhA, the enoyl-ACP reductase from Mycobacterium tuberculosis.</title>
        <authorList>
            <person name="Parikh S."/>
            <person name="Moynihan D.P."/>
            <person name="Xiao G."/>
            <person name="Tonge P.J."/>
        </authorList>
    </citation>
    <scope>CATALYTIC ACTIVITY</scope>
    <scope>BIOPHYSICOCHEMICAL PROPERTIES</scope>
    <scope>REACTION MECHANISM</scope>
    <scope>MUTAGENESIS OF TYR-158 AND LYS-165</scope>
</reference>
<reference key="7">
    <citation type="journal article" date="2002" name="Mol. Microbiol.">
        <title>Overexpression of inhA, but not kasA, confers resistance to isoniazid and ethionamide in Mycobacterium smegmatis, M. bovis BCG and M. tuberculosis.</title>
        <authorList>
            <person name="Larsen M.H."/>
            <person name="Vilcheze C."/>
            <person name="Kremer L."/>
            <person name="Besra G.S."/>
            <person name="Parsons L."/>
            <person name="Salfinger M."/>
            <person name="Heifets L."/>
            <person name="Hazbon M.H."/>
            <person name="Alland D."/>
            <person name="Sacchettini J.C."/>
            <person name="Jacobs W.R. Jr."/>
        </authorList>
    </citation>
    <scope>DRUG TARGET</scope>
    <scope>DRUG RESISTANCE</scope>
    <source>
        <strain>H37Rv</strain>
    </source>
</reference>
<reference key="8">
    <citation type="journal article" date="2003" name="Proc. Natl. Acad. Sci. U.S.A.">
        <title>The isoniazid-NAD adduct is a slow, tight-binding inhibitor of InhA, the Mycobacterium tuberculosis enoyl reductase: adduct affinity and drug resistance.</title>
        <authorList>
            <person name="Rawat R."/>
            <person name="Whitty A."/>
            <person name="Tonge P.J."/>
        </authorList>
    </citation>
    <scope>ACTIVITY REGULATION</scope>
</reference>
<reference key="9">
    <citation type="journal article" date="2008" name="BMC Syst. Biol.">
        <title>targetTB: a target identification pipeline for Mycobacterium tuberculosis through an interactome, reactome and genome-scale structural analysis.</title>
        <authorList>
            <person name="Raman K."/>
            <person name="Yeturu K."/>
            <person name="Chandra N."/>
        </authorList>
    </citation>
    <scope>IDENTIFICATION AS A DRUG TARGET [LARGE SCALE ANALYSIS]</scope>
</reference>
<reference key="10">
    <citation type="journal article" date="2010" name="J. Biol. Chem.">
        <title>Phosphorylation of enoyl-acyl carrier protein reductase InhA impacts mycobacterial growth and survival.</title>
        <authorList>
            <person name="Khan S."/>
            <person name="Nagarajan S.N."/>
            <person name="Parikh A."/>
            <person name="Samantaray S."/>
            <person name="Singh A."/>
            <person name="Kumar D."/>
            <person name="Roy R.P."/>
            <person name="Bhatt A."/>
            <person name="Nandicoori V.K."/>
        </authorList>
    </citation>
    <scope>PHOSPHORYLATION AT THR-266</scope>
    <scope>CATALYTIC ACTIVITY</scope>
    <scope>BIOPHYSICOCHEMICAL PROPERTIES</scope>
    <scope>ACTIVITY REGULATION</scope>
    <source>
        <strain>H37Rv</strain>
    </source>
</reference>
<reference key="11">
    <citation type="journal article" date="2011" name="Mol. Cell. Proteomics">
        <title>Proteogenomic analysis of Mycobacterium tuberculosis by high resolution mass spectrometry.</title>
        <authorList>
            <person name="Kelkar D.S."/>
            <person name="Kumar D."/>
            <person name="Kumar P."/>
            <person name="Balakrishnan L."/>
            <person name="Muthusamy B."/>
            <person name="Yadav A.K."/>
            <person name="Shrivastava P."/>
            <person name="Marimuthu A."/>
            <person name="Anand S."/>
            <person name="Sundaram H."/>
            <person name="Kingsbury R."/>
            <person name="Harsha H.C."/>
            <person name="Nair B."/>
            <person name="Prasad T.S."/>
            <person name="Chauhan D.S."/>
            <person name="Katoch K."/>
            <person name="Katoch V.M."/>
            <person name="Kumar P."/>
            <person name="Chaerkady R."/>
            <person name="Ramachandran S."/>
            <person name="Dash D."/>
            <person name="Pandey A."/>
        </authorList>
    </citation>
    <scope>IDENTIFICATION BY MASS SPECTROMETRY [LARGE SCALE ANALYSIS]</scope>
    <source>
        <strain>ATCC 25618 / H37Rv</strain>
    </source>
</reference>
<reference key="12">
    <citation type="journal article" date="2012" name="Curr. Top. Med. Chem.">
        <title>Targeting InhA, the FASII enoyl-ACP reductase: SAR studies on novel inhibitor scaffolds.</title>
        <authorList>
            <person name="Pan P."/>
            <person name="Tonge P.J."/>
        </authorList>
    </citation>
    <scope>REVIEW</scope>
</reference>
<reference key="13">
    <citation type="journal article" date="2014" name="FEMS Microbiol. Lett.">
        <title>Crucial components of Mycobacterium type II fatty acid biosynthesis (Fas-II) and their inhibitors.</title>
        <authorList>
            <person name="Duan X."/>
            <person name="Xiang X."/>
            <person name="Xie J."/>
        </authorList>
    </citation>
    <scope>REVIEW</scope>
    <scope>PATHWAY</scope>
</reference>
<reference evidence="40 41" key="14">
    <citation type="journal article" date="1995" name="Science">
        <title>Crystal structure and function of the isoniazid target of Mycobacterium tuberculosis.</title>
        <authorList>
            <person name="Dessen A."/>
            <person name="Quemard A."/>
            <person name="Blanchard J.S."/>
            <person name="Jacobs W.R. Jr."/>
            <person name="Sacchettini J.C."/>
        </authorList>
    </citation>
    <scope>X-RAY CRYSTALLOGRAPHY (2.2 ANGSTROMS) OF WILD-TYPE AND MUTANT ALA-94 IN COMPLEX WITH NAD</scope>
    <scope>MUTAGENESIS OF SER-94</scope>
    <scope>DRUG RESISTANCE</scope>
</reference>
<reference evidence="44" key="15">
    <citation type="journal article" date="1998" name="Science">
        <title>Modification of the NADH of the isoniazid target (InhA) from Mycobacterium tuberculosis.</title>
        <authorList>
            <person name="Rozwarski D.A."/>
            <person name="Grant G.A."/>
            <person name="Barton D.H.R."/>
            <person name="Jacobs W.R. Jr."/>
            <person name="Sacchettini J.C."/>
        </authorList>
    </citation>
    <scope>X-RAY CRYSTALLOGRAPHY (2.7 ANGSTROMS) OF 3-269 IN COMPLEX WITH ISONICOTINIC-ACETYL-NICOTINAMIDE-ADENINE DINUCLEOTIDE INHIBITOR (INH-NAD ADDUCT)</scope>
    <scope>ACTIVITY REGULATION</scope>
    <scope>MECHANISM OF ACTION OF ISONIAZID</scope>
</reference>
<reference evidence="39" key="16">
    <citation type="journal article" date="1999" name="J. Biol. Chem.">
        <title>Crystal structure of the Mycobacterium tuberculosis enoyl-ACP reductase, InhA, in complex with NAD+ and a C16 fatty acyl substrate.</title>
        <authorList>
            <person name="Rozwarski D.A."/>
            <person name="Vilcheze C."/>
            <person name="Sugantino M."/>
            <person name="Bittman R."/>
            <person name="Sacchettini J.C."/>
        </authorList>
    </citation>
    <scope>X-RAY CRYSTALLOGRAPHY (2.8 ANGSTROMS) IN COMPLEX WITH NAD AND A C16 FATTY ACYL SUBSTRATE</scope>
    <scope>SUBUNIT</scope>
    <scope>REACTION MECHANISM</scope>
</reference>
<reference evidence="42 43" key="17">
    <citation type="journal article" date="2003" name="J. Biol. Chem.">
        <title>Targeting tuberculosis and malaria through inhibition of enoyl reductase: compound activity and structural data.</title>
        <authorList>
            <person name="Kuo M.R."/>
            <person name="Morbidoni H.R."/>
            <person name="Alland D."/>
            <person name="Sneddon S.F."/>
            <person name="Gourlie B.B."/>
            <person name="Staveski M.M."/>
            <person name="Leonard M."/>
            <person name="Gregory J.S."/>
            <person name="Janjigian A.D."/>
            <person name="Yee C."/>
            <person name="Musser J.M."/>
            <person name="Kreiswirth B."/>
            <person name="Iwamoto H."/>
            <person name="Perozzo R."/>
            <person name="Jacobs W.R. Jr."/>
            <person name="Sacchettini J.C."/>
            <person name="Fidock D.A."/>
        </authorList>
    </citation>
    <scope>X-RAY CRYSTALLOGRAPHY (2.60 ANGSTROMS) IN COMPLEXES WITH 5-{[4-(9H-FLUOREN-9-YL)PIPERAZIN-1-YL]CARBONYL}-1H-INDOLE INHIBITOR; NAD AND TRICLOSAN</scope>
    <scope>INHIBITOR SCREENING</scope>
    <scope>ACTIVITY REGULATION</scope>
</reference>
<reference evidence="49 50 51" key="18">
    <citation type="journal article" date="2006" name="ACS Chem. Biol.">
        <title>High affinity InhA inhibitors with activity against drug-resistant strains of Mycobacterium tuberculosis.</title>
        <authorList>
            <person name="Sullivan T.J."/>
            <person name="Truglio J.J."/>
            <person name="Boyne M.E."/>
            <person name="Novichenok P."/>
            <person name="Zhang X."/>
            <person name="Stratton C.F."/>
            <person name="Li H.J."/>
            <person name="Kaur T."/>
            <person name="Amin A."/>
            <person name="Johnson F."/>
            <person name="Slayden R.A."/>
            <person name="Kisker C."/>
            <person name="Tonge P.J."/>
        </authorList>
    </citation>
    <scope>X-RAY CRYSTALLOGRAPHY (2.30 ANGSTROMS) IN COMPLEXES WITH NAD; 5-OCTYL-2-PHENOXYPHENOL AND TRICLOSAN</scope>
    <scope>ACTIVITY REGULATION</scope>
</reference>
<reference evidence="91 92 93 94" key="19">
    <citation type="journal article" date="2006" name="J. Med. Chem.">
        <title>Pyrrolidine carboxamides as a novel class of inhibitors of enoyl acyl carrier protein reductase from Mycobacterium tuberculosis.</title>
        <authorList>
            <person name="He X."/>
            <person name="Alian A."/>
            <person name="Stroud R."/>
            <person name="Ortiz de Montellano P.R."/>
        </authorList>
    </citation>
    <scope>X-RAY CRYSTALLOGRAPHY (1.62 ANGSTROMS) IN COMPLEXES WITH VARIOUS PYRROLIDINE CARBOXAMIDES INHIBITORS AND NAD</scope>
    <scope>INHIBITOR SCREENING</scope>
    <scope>ACTIVITY REGULATION</scope>
</reference>
<reference evidence="45 46 47 48" key="20">
    <citation type="journal article" date="2006" name="J. Mol. Biol.">
        <title>Crystallographic and pre-steady-state kinetics studies on binding of NADH to wild-type and isoniazid-resistant enoyl-ACP(CoA) reductase enzymes from Mycobacterium tuberculosis.</title>
        <authorList>
            <person name="Oliveira J.S."/>
            <person name="Pereira J.H."/>
            <person name="Canduri F."/>
            <person name="Rodrigues N.C."/>
            <person name="de Souza O.N."/>
            <person name="de Azevedo W.F. Jr."/>
            <person name="Basso L.A."/>
            <person name="Santos D.S."/>
        </authorList>
    </citation>
    <scope>X-RAY CRYSTALLOGRAPHY (1.92 ANGSTROMS) OF WILD-TYPE AND MUTANTS ALA-94; THR-47 AND VAL-21 IN COMPLEX WITH NAD</scope>
    <scope>SUBUNIT</scope>
</reference>
<reference evidence="59" key="21">
    <citation type="journal article" date="2006" name="Nat. Med.">
        <title>Transfer of a point mutation in Mycobacterium tuberculosis inhA resolves the target of isoniazid.</title>
        <authorList>
            <person name="Vilcheze C."/>
            <person name="Wang F."/>
            <person name="Arai M."/>
            <person name="Hazbon M.H."/>
            <person name="Colangeli R."/>
            <person name="Kremer L."/>
            <person name="Weisbrod T.R."/>
            <person name="Alland D."/>
            <person name="Sacchettini J.C."/>
            <person name="Jacobs W.R. Jr."/>
        </authorList>
    </citation>
    <scope>X-RAY CRYSTALLOGRAPHY (1.90 ANGSTROMS) OF 3-269 OF MUTANT ALA-94 IN COMPLEX WITH ISONICOTINIC-ACETYL-NICOTINAMIDE-ADENINE DINUCLEOTIDE INHIBITOR (INH-NAD ADDUCT)</scope>
    <scope>DRUG TARGET</scope>
    <scope>DRUG RESISTANCE</scope>
    <scope>MUTAGENESIS OF SER-94</scope>
    <source>
        <strain>H37Rv</strain>
    </source>
</reference>
<reference evidence="57" key="22">
    <citation type="journal article" date="2007" name="Bioorg. Med. Chem.">
        <title>Inhibition of the Mycobacterium tuberculosis enoyl acyl carrier protein reductase InhA by arylamides.</title>
        <authorList>
            <person name="He X."/>
            <person name="Alian A."/>
            <person name="Ortiz de Montellano P.R."/>
        </authorList>
    </citation>
    <scope>X-RAY CRYSTALLOGRAPHY (1.90 ANGSTROMS) IN COMPLEX WITH N-(4-METHYLBENZOYL)-4-BENZYLPIPERIDINE INHIBITOR AND NAD</scope>
    <scope>INHIBITOR SCREENING</scope>
    <scope>ACTIVITY REGULATION</scope>
</reference>
<reference evidence="60" key="23">
    <citation type="journal article" date="2007" name="J. Am. Chem. Soc.">
        <title>New insight into the mechanism of action of and resistance to isoniazid: interaction of Mycobacterium tuberculosis enoyl-ACP reductase with INH-NADP.</title>
        <authorList>
            <person name="Argyrou A."/>
            <person name="Vetting M.W."/>
            <person name="Blanchard J.S."/>
        </authorList>
    </citation>
    <scope>X-RAY CRYSTALLOGRAPHY (2.50 ANGSTROMS) IN COMPLEX WITH (4S)-ISONICOTINIC-ACETYL-NICOTINAMIDE-ADENINE DINUCLEOTIDE PHOSPHATE INHIBITOR (INH-NADP ADDUCT)</scope>
</reference>
<reference evidence="52 58" key="24">
    <citation type="journal article" date="2007" name="J. Exp. Med.">
        <title>Mechanism of thioamide drug action against tuberculosis and leprosy.</title>
        <authorList>
            <person name="Wang F."/>
            <person name="Langley R."/>
            <person name="Gulten G."/>
            <person name="Dover L.G."/>
            <person name="Besra G.S."/>
            <person name="Jacobs W.R. Jr."/>
            <person name="Sacchettini J.C."/>
        </authorList>
    </citation>
    <scope>X-RAY CRYSTALLOGRAPHY (2.20 ANGSTROMS) IN COMPLEXES WITH (4S)-4-(2-PROPYLISONICOTINOYL)NICOTINAMIDE ADENINE DINUCLEOTIDE (PTH-NAD ADDUCT) AND (4S)-4-(2-ETHYLISONICOTINOYL)NICOTINAMIDE ADENINE DINUCLEOTIDE (ETH-NAD ADDUCT) INHIBITORS</scope>
    <scope>DRUG TARGET</scope>
    <scope>ACTIVITY REGULATION</scope>
</reference>
<reference evidence="53 54 55 56" key="25">
    <citation type="journal article" date="2007" name="J. Struct. Biol.">
        <title>Crystallographic studies on the binding of isonicotinyl-NAD adduct to wild-type and isoniazid resistant 2-trans-enoyl-ACP (CoA) reductase from Mycobacterium tuberculosis.</title>
        <authorList>
            <person name="Dias M.V."/>
            <person name="Vasconcelos I.B."/>
            <person name="Prado A.M."/>
            <person name="Fadel V."/>
            <person name="Basso L.A."/>
            <person name="de Azevedo W.F. Jr."/>
            <person name="Santos D.S."/>
        </authorList>
    </citation>
    <scope>X-RAY CRYSTALLOGRAPHY (2.00 ANGSTROMS) OF WILD-TYPE AND MUTANTS VAL-21 AND ALA-94 UNCOMPLEXED AND IN COMPLEX WITH ISONICOTINIC-ACETYL-NICOTINAMIDE-ADENINE DINUCLEOTIDE INHIBITOR (INH-NAD ADDUCT)</scope>
</reference>
<reference evidence="63 64 65 66" key="26">
    <citation type="journal article" date="2009" name="ChemMedChem">
        <title>Triclosan derivatives: towards potent inhibitors of drug-sensitive and drug-resistant Mycobacterium tuberculosis.</title>
        <authorList>
            <person name="Freundlich J.S."/>
            <person name="Wang F."/>
            <person name="Vilcheze C."/>
            <person name="Gulten G."/>
            <person name="Langley R."/>
            <person name="Schiehser G.A."/>
            <person name="Jacobus D.P."/>
            <person name="Jacobs W.R. Jr."/>
            <person name="Sacchettini J.C."/>
        </authorList>
    </citation>
    <scope>X-RAY CRYSTALLOGRAPHY (1.97 ANGSTROMS) IN COMPLEX WITH TRICLOSAN DERIVATIVES INHIBITORS AND NAD</scope>
    <scope>ACTIVITY REGULATION</scope>
</reference>
<reference evidence="61 62" key="27">
    <citation type="journal article" date="2010" name="J. Biol. Chem.">
        <title>A slow, tight binding inhibitor of InhA, the enoyl-acyl carrier protein reductase from Mycobacterium tuberculosis.</title>
        <authorList>
            <person name="Luckner S.R."/>
            <person name="Liu N."/>
            <person name="am Ende C.W."/>
            <person name="Tonge P.J."/>
            <person name="Kisker C."/>
        </authorList>
    </citation>
    <scope>X-RAY CRYSTALLOGRAPHY (1.81 ANGSTROMS) IN COMPLEX WITH 5-HEXYL-2-(2-METHYLPHENOXY)PHENOL INHIBITOR AND NAD</scope>
    <scope>ACTIVITY REGULATION</scope>
</reference>
<reference evidence="67 68 69" key="28">
    <citation type="journal article" date="2010" name="Mol. Microbiol.">
        <title>Phosphorylation of InhA inhibits mycolic acid biosynthesis and growth of Mycobacterium tuberculosis.</title>
        <authorList>
            <person name="Molle V."/>
            <person name="Gulten G."/>
            <person name="Vilcheze C."/>
            <person name="Veyron-Churlet R."/>
            <person name="Zanella-Cleon I."/>
            <person name="Sacchettini J.C."/>
            <person name="Jacobs W.R. Jr."/>
            <person name="Kremer L."/>
        </authorList>
    </citation>
    <scope>X-RAY CRYSTALLOGRAPHY (2.00 ANGSTROMS) OF WILD-TYPE AND MUTANTS ASP-266 AND GLU-266 IN COMPLEX WITH NAD</scope>
    <scope>PHOSPHORYLATION AT THR-266</scope>
    <scope>CATALYTIC ACTIVITY</scope>
    <scope>BIOPHYSICOCHEMICAL PROPERTIES</scope>
    <scope>ACTIVITY REGULATION</scope>
    <scope>MUTAGENESIS OF THR-266</scope>
    <source>
        <strain>H37Rv</strain>
    </source>
</reference>
<reference evidence="77 78 79" key="29">
    <citation type="journal article" date="2012" name="EMBO Mol. Med.">
        <title>Towards a new tuberculosis drug: pyridomycin - nature's isoniazid.</title>
        <authorList>
            <person name="Hartkoorn R.C."/>
            <person name="Sala C."/>
            <person name="Neres J."/>
            <person name="Pojer F."/>
            <person name="Magnet S."/>
            <person name="Mukherjee R."/>
            <person name="Uplekar S."/>
            <person name="Boy-Rottger S."/>
            <person name="Altmann K.H."/>
            <person name="Cole S.T."/>
        </authorList>
    </citation>
    <scope>X-RAY CRYSTALLOGRAPHY (1.90 ANGSTROMS) OF WILD-TYPE AND MUTANTS ALA-94 AND GLY-148 IN COMPLEX WITH NADH</scope>
    <scope>ACTIVITY REGULATION</scope>
    <scope>CATALYTIC ACTIVITY</scope>
    <scope>BIOPHYSICOCHEMICAL PROPERTIES</scope>
    <scope>MUTAGENESIS OF SER-94 AND ASP-148</scope>
    <source>
        <strain>H37Rv</strain>
    </source>
</reference>
<reference evidence="73 74" key="30">
    <citation type="journal article" date="2013" name="J. Med. Chem.">
        <title>Methyl-thiazoles: a novel mode of inhibition with the potential to develop novel inhibitors targeting InhA in Mycobacterium tuberculosis.</title>
        <authorList>
            <person name="Shirude P.S."/>
            <person name="Madhavapeddi P."/>
            <person name="Naik M."/>
            <person name="Murugan K."/>
            <person name="Shinde V."/>
            <person name="Nandishaiah R."/>
            <person name="Bhat J."/>
            <person name="Kumar A."/>
            <person name="Hameed S."/>
            <person name="Holdgate G."/>
            <person name="Davies G."/>
            <person name="McMiken H."/>
            <person name="Hegde N."/>
            <person name="Ambady A."/>
            <person name="Venkatraman J."/>
            <person name="Panda M."/>
            <person name="Bandodkar B."/>
            <person name="Sambandamurthy V.K."/>
            <person name="Read J.A."/>
        </authorList>
    </citation>
    <scope>X-RAY CRYSTALLOGRAPHY (1.89 ANGSTROMS) IN COMPLEXES WITH METHYL-THIAZOLE INHIBITORS AND NAD</scope>
    <scope>ACTIVITY REGULATION</scope>
</reference>
<reference evidence="80 81 82 83 84" key="31">
    <citation type="journal article" date="2014" name="ACS Chem. Biol.">
        <title>A structural and energetic model for the slow-onset inhibition of the Mycobacterium tuberculosis enoyl-ACP reductase InhA.</title>
        <authorList>
            <person name="Li H.J."/>
            <person name="Lai C.T."/>
            <person name="Pan P."/>
            <person name="Yu W."/>
            <person name="Liu N."/>
            <person name="Bommineni G.R."/>
            <person name="Garcia-Diaz M."/>
            <person name="Simmerling C."/>
            <person name="Tonge P.J."/>
        </authorList>
    </citation>
    <scope>X-RAY CRYSTALLOGRAPHY (1.60 ANGSTROMS) IN COMPLEXES WITH VARIOUS ALKYL DIPHENYL ETHER INHIBITORS AND NAD</scope>
</reference>
<reference key="32">
    <citation type="journal article" date="2014" name="ChemMedChem">
        <title>Time-dependent diaryl ether inhibitors of InhA: structure-activity relationship studies of enzyme inhibition, antibacterial activity, and in vivo efficacy.</title>
        <authorList>
            <person name="Pan P."/>
            <person name="Knudson S.E."/>
            <person name="Bommineni G.R."/>
            <person name="Li H.J."/>
            <person name="Lai C.T."/>
            <person name="Liu N."/>
            <person name="Garcia-Diaz M."/>
            <person name="Simmerling C."/>
            <person name="Patil S.S."/>
            <person name="Slayden R.A."/>
            <person name="Tonge P.J."/>
        </authorList>
    </citation>
    <scope>X-RAY CRYSTALLOGRAPHY (1.85 ANGSTROMS) IN COMPLEX WITH 2-(2-CYANOPHENOXY)-5-HEXYLPHENOL INHIBITOR AND NAD</scope>
    <scope>ACTIVITY REGULATION</scope>
</reference>
<reference evidence="70 71 72" key="33">
    <citation type="journal article" date="2014" name="Nat. Chem. Biol.">
        <title>Pyridomycin bridges the NADH- and substrate-binding pockets of the enoyl reductase InhA.</title>
        <authorList>
            <person name="Hartkoorn R.C."/>
            <person name="Pojer F."/>
            <person name="Read J.A."/>
            <person name="Gingell H."/>
            <person name="Neres J."/>
            <person name="Horlacher O.P."/>
            <person name="Altmann K.H."/>
            <person name="Cole S.T."/>
        </authorList>
    </citation>
    <scope>X-RAY CRYSTALLOGRAPHY (1.95 ANGSTROMS) OF WILD-TYPE AND MUTANT ALA-94 IN COMPLEXES WITH NAD; PYRIDOMYCIN AND PYRIDOMYCIN ANALOG OH141 INHIBITORS</scope>
    <scope>ACTIVITY REGULATION</scope>
</reference>
<reference evidence="75 76" key="34">
    <citation type="submission" date="2014-04" db="PDB data bank">
        <title>Pyridazinones: a novel scaffold with excellent physicochemical properties and safety profile for a clinically validated target of Mycobacterium tuberculosis.</title>
        <authorList>
            <person name="Lange S."/>
        </authorList>
    </citation>
    <scope>X-RAY CRYSTALLOGRAPHY (1.64 ANGSTROMS) IN COMPLEXES WITH PYRIDAZINONES AND NAD</scope>
</reference>
<reference evidence="95 96 97 98 99" key="35">
    <citation type="submission" date="2014-08" db="PDB data bank">
        <title>Hitting the target in more than one way: novel, direct inhibitors of Mycobacterium tuberculosis enoyl ACP reductase.</title>
        <authorList>
            <person name="Madhavapeddi P."/>
            <person name="Kale R.R."/>
            <person name="Cowen S.D."/>
            <person name="Ghorpade S.R."/>
            <person name="Davies G."/>
            <person name="Bellale E.V."/>
            <person name="Kale M.G."/>
            <person name="Srivastava A."/>
            <person name="Spadola L."/>
            <person name="Kawatkar A."/>
            <person name="Raichurkar A.V."/>
            <person name="Tonge M."/>
            <person name="Nandishaiah R."/>
            <person name="Guptha S."/>
            <person name="Narayan A."/>
            <person name="Gingell H."/>
            <person name="Plant D."/>
            <person name="Landge S."/>
            <person name="Menasinakai S."/>
            <person name="Prabhakar K.R."/>
            <person name="Achar V."/>
            <person name="Ambady A."/>
            <person name="Sambandamurthy V.K."/>
            <person name="Ramachandran V."/>
            <person name="Panduga V."/>
            <person name="Reddy J."/>
            <person name="Kumar C.N.N."/>
            <person name="Kaur P."/>
            <person name="Shandil R."/>
            <person name="Iyer P.S."/>
            <person name="Narayanan S."/>
            <person name="Read J.A."/>
        </authorList>
    </citation>
    <scope>X-RAY CRYSTALLOGRAPHY (1.73 ANGSTROMS) IN COMPLEXES WITH VARIOUS PYRIMIDINE ISOXAZOLES AND NAD</scope>
</reference>
<reference evidence="100 101 102" key="36">
    <citation type="journal article" date="2015" name="Biochemistry">
        <title>Rational modulation of the induced-fit conformational change for slow-onset inhibition in Mycobacterium tuberculosis InhA.</title>
        <authorList>
            <person name="Lai C.T."/>
            <person name="Li H.J."/>
            <person name="Yu W."/>
            <person name="Shah S."/>
            <person name="Bommineni G.R."/>
            <person name="Perrone V."/>
            <person name="Garcia-Diaz M."/>
            <person name="Tonge P.J."/>
            <person name="Simmerling C."/>
        </authorList>
    </citation>
    <scope>X-RAY CRYSTALLOGRAPHY (2.00 ANGSTROMS) OF MUTANTS ALA-203 AND ALA-215 IN COMPLEX WITH DIARYL ETHERS AND NAD</scope>
</reference>
<reference evidence="88 89 90" key="37">
    <citation type="journal article" date="2015" name="J. Struct. Biol.">
        <title>Crystal structure of the enoyl-ACP reductase of Mycobacterium tuberculosis (InhA) in the apo-form and in complex with the active metabolite of isoniazid pre-formed by a biomimetic approach.</title>
        <authorList>
            <person name="Chollet A."/>
            <person name="Mourey L."/>
            <person name="Lherbet C."/>
            <person name="Delbot A."/>
            <person name="Julien S."/>
            <person name="Baltas M."/>
            <person name="Bernadou J."/>
            <person name="Pratviel G."/>
            <person name="Maveyraud L."/>
            <person name="Bernardes-Genisson V."/>
        </authorList>
    </citation>
    <scope>X-RAY CRYSTALLOGRAPHY (1.40 ANGSTROMS) OF THE APO FORM AND IN COMPLEXES WITH NADH AND THE INH-NAD ADDUCT INHIBITOR</scope>
</reference>
<reference evidence="86 87" key="38">
    <citation type="journal article" date="2015" name="Sci. Transl. Med.">
        <title>Direct inhibitors of InhA are active against Mycobacterium tuberculosis.</title>
        <authorList>
            <person name="Manjunatha U.H."/>
            <person name="Rao S.P.S."/>
            <person name="Kondreddi R.R."/>
            <person name="Noble C.G."/>
            <person name="Camacho L.R."/>
            <person name="Tan B.H."/>
            <person name="Ng S.H."/>
            <person name="Ng P.S."/>
            <person name="Ma N.L."/>
            <person name="Lakshminarayana S.B."/>
            <person name="Herve M."/>
            <person name="Barnes S.W."/>
            <person name="Yu W."/>
            <person name="Kuhen K."/>
            <person name="Blasco F."/>
            <person name="Beer D."/>
            <person name="Walker J.R."/>
            <person name="Tonge P.J."/>
            <person name="Glynne R."/>
            <person name="Smith P.W."/>
            <person name="Diagana T.T."/>
        </authorList>
    </citation>
    <scope>X-RAY CRYSTALLOGRAPHY (2.90 ANGSTROMS) IN COMPLEXES WITH 4-HYDROXY-2-PYRIDONE INHIBITORS AND NAD</scope>
    <scope>ACTIVITY REGULATION</scope>
</reference>
<reference evidence="85" key="39">
    <citation type="journal article" date="2016" name="ChemMedChem">
        <title>N-Benzyl-4-((heteroaryl)methyl)benzamides: a new class of direct NADH-dependent 2-trans enoyl-acyl carrier protein reductase (InhA) inhibitors with antitubercular activity.</title>
        <authorList>
            <person name="Guardia A."/>
            <person name="Gulten G."/>
            <person name="Fernandez R."/>
            <person name="Gomez J."/>
            <person name="Wang F."/>
            <person name="Convery M."/>
            <person name="Blanco D."/>
            <person name="Martinez M."/>
            <person name="Perez-Herran E."/>
            <person name="Alonso M."/>
            <person name="Ortega F."/>
            <person name="Rullas J."/>
            <person name="Calvo D."/>
            <person name="Mata L."/>
            <person name="Young R."/>
            <person name="Sacchettini J.C."/>
            <person name="Mendoza-Losana A."/>
            <person name="Remuinan M."/>
            <person name="Ballell Pages L."/>
            <person name="Castro-Pichel J."/>
        </authorList>
    </citation>
    <scope>X-RAY CRYSTALLOGRAPHY (2.20 ANGSTROMS) WITH A N-BENZYL-4-((HETEROARYL)METHYL)BENZAMIDE INHIBITOR AND NAD</scope>
    <scope>ACTIVITY REGULATION</scope>
</reference>
<reference key="40">
    <citation type="journal article" date="2016" name="EBioMedicine">
        <title>Antitubercular drugs for an old target: GSK693 as a promising InhA direct inhibitor.</title>
        <authorList>
            <person name="Martinez-Hoyos M."/>
            <person name="Perez-Herran E."/>
            <person name="Gulten G."/>
            <person name="Encinas L."/>
            <person name="Alvarez-Gomez D."/>
            <person name="Alvarez E."/>
            <person name="Ferrer-Bazaga S."/>
            <person name="Garcia-Perez A."/>
            <person name="Ortega F."/>
            <person name="Angulo-Barturen I."/>
            <person name="Rullas-Trincado J."/>
            <person name="Blanco Ruano D."/>
            <person name="Torres P."/>
            <person name="Castaneda P."/>
            <person name="Huss S."/>
            <person name="Fernandez Menendez R."/>
            <person name="Gonzalez Del Valle S."/>
            <person name="Ballell L."/>
            <person name="Barros D."/>
            <person name="Modha S."/>
            <person name="Dhar N."/>
            <person name="Signorino-Gelo F."/>
            <person name="McKinney J.D."/>
            <person name="Garcia-Bustos J.F."/>
            <person name="Lavandera J.L."/>
            <person name="Sacchettini J.C."/>
            <person name="Jimenez M.S."/>
            <person name="Martin-Casabona N."/>
            <person name="Castro-Pichel J."/>
            <person name="Mendoza-Losana A."/>
        </authorList>
    </citation>
    <scope>X-RAY CRYSTALLOGRAPHY (2.91 ANGSTROMS) IN COMPLEX WITH THE THIADIAZOLE INHIBITOR GSK625 AND NAD</scope>
    <scope>ACTIVITY REGULATION</scope>
</reference>
<gene>
    <name evidence="30" type="primary">inhA</name>
    <name type="ordered locus">Rv1484</name>
    <name type="ORF">MTCY277.05</name>
</gene>
<name>INHA_MYCTU</name>
<sequence>MTGLLDGKRILVSGIITDSSIAFHIARVAQEQGAQLVLTGFDRLRLIQRITDRLPAKAPLLELDVQNEEHLASLAGRVTEAIGAGNKLDGVVHSIGFMPQTGMGINPFFDAPYADVSKGIHISAYSYASMAKALLPIMNPGGSIVGMDFDPSRAMPAYNWMTVAKSALESVNRFVAREAGKYGVRSNLVAAGPIRTLAMSAIVGGALGEEAGAQIQLLEEGWDQRAPIGWNMKDATPVAKTVCALLSDWLPATTGDIIYADGGAHTQLL</sequence>
<organism>
    <name type="scientific">Mycobacterium tuberculosis (strain ATCC 25618 / H37Rv)</name>
    <dbReference type="NCBI Taxonomy" id="83332"/>
    <lineage>
        <taxon>Bacteria</taxon>
        <taxon>Bacillati</taxon>
        <taxon>Actinomycetota</taxon>
        <taxon>Actinomycetes</taxon>
        <taxon>Mycobacteriales</taxon>
        <taxon>Mycobacteriaceae</taxon>
        <taxon>Mycobacterium</taxon>
        <taxon>Mycobacterium tuberculosis complex</taxon>
    </lineage>
</organism>
<feature type="chain" id="PRO_0000054916" description="Enoyl-[acyl-carrier-protein] reductase [NADH]">
    <location>
        <begin position="1"/>
        <end position="269"/>
    </location>
</feature>
<feature type="binding site" evidence="1 6 24 39 40 45">
    <location>
        <begin position="20"/>
        <end position="21"/>
    </location>
    <ligand>
        <name>NAD(+)</name>
        <dbReference type="ChEBI" id="CHEBI:57540"/>
    </ligand>
</feature>
<feature type="binding site" evidence="1 6 24 39 40 45">
    <location>
        <begin position="64"/>
        <end position="65"/>
    </location>
    <ligand>
        <name>NAD(+)</name>
        <dbReference type="ChEBI" id="CHEBI:57540"/>
    </ligand>
</feature>
<feature type="binding site" evidence="1 6 24 39 40 45">
    <location>
        <begin position="95"/>
        <end position="96"/>
    </location>
    <ligand>
        <name>NAD(+)</name>
        <dbReference type="ChEBI" id="CHEBI:57540"/>
    </ligand>
</feature>
<feature type="binding site" evidence="1">
    <location>
        <position position="158"/>
    </location>
    <ligand>
        <name>substrate</name>
    </ligand>
</feature>
<feature type="binding site" evidence="1 6 24 39 40 45">
    <location>
        <position position="165"/>
    </location>
    <ligand>
        <name>NAD(+)</name>
        <dbReference type="ChEBI" id="CHEBI:57540"/>
    </ligand>
</feature>
<feature type="binding site" evidence="1 6 24 39 40 45">
    <location>
        <position position="194"/>
    </location>
    <ligand>
        <name>NAD(+)</name>
        <dbReference type="ChEBI" id="CHEBI:57540"/>
    </ligand>
</feature>
<feature type="site" description="May act as an intermediate that passes the hydride ion from NADH to the substrate" evidence="32">
    <location>
        <position position="149"/>
    </location>
</feature>
<feature type="site" description="Transition state stabilizer" evidence="33">
    <location>
        <position position="158"/>
    </location>
</feature>
<feature type="modified residue" description="Phosphothreonine" evidence="14 15">
    <location>
        <position position="266"/>
    </location>
</feature>
<feature type="mutagenesis site" description="Confers INH and ETH resistance. The mutant is 17 times more resistant to inhibition by the INH-NAD adduct. 5- to 6-fold decrease in affinity for NADH that results from a perturbation in the hydrogen-bonding network that stabilizes NADH binding. Nearly no effect on the velocity of the enzyme. Has no impact on the susceptibility to pyridomycin." evidence="7 16 23 24">
    <original>S</original>
    <variation>A</variation>
    <location>
        <position position="94"/>
    </location>
</feature>
<feature type="mutagenesis site" description="Confers pyridomycin resistance. Has no impact on the susceptibility to isoniazid and moxifloxacin. 14-fold decrease in NADH affinity, while no effect on catalytic activity." evidence="16">
    <original>D</original>
    <variation>G</variation>
    <location>
        <position position="148"/>
    </location>
</feature>
<feature type="mutagenesis site" description="1500-fold decrease in catalytic activity while no effect on lipid substrate affinity." evidence="2">
    <original>Y</original>
    <variation>A</variation>
    <location>
        <position position="158"/>
    </location>
</feature>
<feature type="mutagenesis site" description="24-fold decrease in catalytic activity while no effect on lipid substrate affinity." evidence="2">
    <original>Y</original>
    <variation>F</variation>
    <location>
        <position position="158"/>
    </location>
</feature>
<feature type="mutagenesis site" description="No effect on catalytic activity." evidence="2">
    <original>Y</original>
    <variation>S</variation>
    <location>
        <position position="158"/>
    </location>
</feature>
<feature type="mutagenesis site" description="Loss of enzyme's ability to bind NADH." evidence="2">
    <original>K</original>
    <variation>A</variation>
    <variation>M</variation>
    <location>
        <position position="165"/>
    </location>
</feature>
<feature type="mutagenesis site" description="No effect on the enzyme's catalytic ability or on its ability to bind NADH." evidence="2">
    <original>K</original>
    <variation>Q</variation>
    <variation>R</variation>
    <location>
        <position position="165"/>
    </location>
</feature>
<feature type="mutagenesis site" description="No effect on catalytic activity. Loss of phosphorylation. Does not alter growth of M.tuberculosis." evidence="15">
    <original>T</original>
    <variation>A</variation>
    <location>
        <position position="266"/>
    </location>
</feature>
<feature type="mutagenesis site" description="Severely impairs catalytic activity, as a consequence of a reduced binding affinity to NADH. These single point mutations are lethal to M.tuberculosis. These mutants fail to complement growth and mycolic acid defects of an inhA-thermosensitive M.smegmatis strain, in a similar manner to what is observed following isoniazid treatment." evidence="15">
    <original>T</original>
    <variation>D</variation>
    <variation>E</variation>
    <location>
        <position position="266"/>
    </location>
</feature>
<feature type="turn" evidence="104">
    <location>
        <begin position="4"/>
        <end position="7"/>
    </location>
</feature>
<feature type="strand" evidence="104">
    <location>
        <begin position="9"/>
        <end position="13"/>
    </location>
</feature>
<feature type="strand" evidence="103">
    <location>
        <begin position="16"/>
        <end position="20"/>
    </location>
</feature>
<feature type="helix" evidence="104">
    <location>
        <begin position="21"/>
        <end position="31"/>
    </location>
</feature>
<feature type="strand" evidence="104">
    <location>
        <begin position="35"/>
        <end position="40"/>
    </location>
</feature>
<feature type="helix" evidence="104">
    <location>
        <begin position="44"/>
        <end position="51"/>
    </location>
</feature>
<feature type="strand" evidence="104">
    <location>
        <begin position="54"/>
        <end position="56"/>
    </location>
</feature>
<feature type="strand" evidence="104">
    <location>
        <begin position="60"/>
        <end position="62"/>
    </location>
</feature>
<feature type="helix" evidence="104">
    <location>
        <begin position="68"/>
        <end position="82"/>
    </location>
</feature>
<feature type="strand" evidence="104">
    <location>
        <begin position="88"/>
        <end position="93"/>
    </location>
</feature>
<feature type="helix" evidence="104">
    <location>
        <begin position="100"/>
        <end position="102"/>
    </location>
</feature>
<feature type="strand" evidence="105">
    <location>
        <begin position="103"/>
        <end position="106"/>
    </location>
</feature>
<feature type="helix" evidence="104">
    <location>
        <begin position="108"/>
        <end position="110"/>
    </location>
</feature>
<feature type="helix" evidence="104">
    <location>
        <begin position="113"/>
        <end position="123"/>
    </location>
</feature>
<feature type="helix" evidence="104">
    <location>
        <begin position="125"/>
        <end position="134"/>
    </location>
</feature>
<feature type="helix" evidence="104">
    <location>
        <begin position="135"/>
        <end position="137"/>
    </location>
</feature>
<feature type="strand" evidence="104">
    <location>
        <begin position="138"/>
        <end position="148"/>
    </location>
</feature>
<feature type="strand" evidence="105">
    <location>
        <begin position="152"/>
        <end position="154"/>
    </location>
</feature>
<feature type="turn" evidence="104">
    <location>
        <begin position="156"/>
        <end position="158"/>
    </location>
</feature>
<feature type="helix" evidence="104">
    <location>
        <begin position="159"/>
        <end position="180"/>
    </location>
</feature>
<feature type="turn" evidence="104">
    <location>
        <begin position="181"/>
        <end position="183"/>
    </location>
</feature>
<feature type="strand" evidence="104">
    <location>
        <begin position="185"/>
        <end position="191"/>
    </location>
</feature>
<feature type="helix" evidence="104">
    <location>
        <begin position="197"/>
        <end position="203"/>
    </location>
</feature>
<feature type="turn" evidence="104">
    <location>
        <begin position="204"/>
        <end position="207"/>
    </location>
</feature>
<feature type="helix" evidence="104">
    <location>
        <begin position="209"/>
        <end position="225"/>
    </location>
</feature>
<feature type="helix" evidence="104">
    <location>
        <begin position="236"/>
        <end position="246"/>
    </location>
</feature>
<feature type="strand" evidence="104">
    <location>
        <begin position="247"/>
        <end position="249"/>
    </location>
</feature>
<feature type="strand" evidence="104">
    <location>
        <begin position="255"/>
        <end position="261"/>
    </location>
</feature>
<feature type="helix" evidence="104">
    <location>
        <begin position="264"/>
        <end position="266"/>
    </location>
</feature>
<protein>
    <recommendedName>
        <fullName evidence="29">Enoyl-[acyl-carrier-protein] reductase [NADH]</fullName>
        <shortName evidence="27">ENR</shortName>
        <shortName evidence="29">Enoyl-ACP reductase</shortName>
        <ecNumber evidence="23">1.3.1.9</ecNumber>
    </recommendedName>
    <alternativeName>
        <fullName evidence="31">FAS-II enoyl-ACP reductase</fullName>
    </alternativeName>
    <alternativeName>
        <fullName evidence="36">NADH-dependent 2-trans-enoyl-ACP reductase</fullName>
    </alternativeName>
</protein>
<proteinExistence type="evidence at protein level"/>